<accession>P17948</accession>
<accession>A3E342</accession>
<accession>A3E344</accession>
<accession>A8KA71</accession>
<accession>B0LPF1</accession>
<accession>B2BF46</accession>
<accession>B2BF47</accession>
<accession>B2BF48</accession>
<accession>B3FR89</accession>
<accession>B5A923</accession>
<accession>F5H5L6</accession>
<accession>O60722</accession>
<accession>P16057</accession>
<accession>Q12954</accession>
<sequence>MVSYWDTGVLLCALLSCLLLTGSSSGSKLKDPELSLKGTQHIMQAGQTLHLQCRGEAAHKWSLPEMVSKESERLSITKSACGRNGKQFCSTLTLNTAQANHTGFYSCKYLAVPTSKKKETESAIYIFISDTGRPFVEMYSEIPEIIHMTEGRELVIPCRVTSPNITVTLKKFPLDTLIPDGKRIIWDSRKGFIISNATYKEIGLLTCEATVNGHLYKTNYLTHRQTNTIIDVQISTPRPVKLLRGHTLVLNCTATTPLNTRVQMTWSYPDEKNKRASVRRRIDQSNSHANIFYSVLTIDKMQNKDKGLYTCRVRSGPSFKSVNTSVHIYDKAFITVKHRKQQVLETVAGKRSYRLSMKVKAFPSPEVVWLKDGLPATEKSARYLTRGYSLIIKDVTEEDAGNYTILLSIKQSNVFKNLTATLIVNVKPQIYEKAVSSFPDPALYPLGSRQILTCTAYGIPQPTIKWFWHPCNHNHSEARCDFCSNNEESFILDADSNMGNRIESITQRMAIIEGKNKMASTLVVADSRISGIYICIASNKVGTVGRNISFYITDVPNGFHVNLEKMPTEGEDLKLSCTVNKFLYRDVTWILLRTVNNRTMHYSISKQKMAITKEHSITLNLTIMNVSLQDSGTYACRARNVYTGEEILQKKEITIRDQEAPYLLRNLSDHTVAISSSTTLDCHANGVPEPQITWFKNNHKIQQEPGIILGPGSSTLFIERVTEEDEGVYHCKATNQKGSVESSAYLTVQGTSDKSNLELITLTCTCVAATLFWLLLTLFIRKMKRSSSEIKTDYLSIIMDPDEVPLDEQCERLPYDASKWEFARERLKLGKSLGRGAFGKVVQASAFGIKKSPTCRTVAVKMLKEGATASEYKALMTELKILTHIGHHLNVVNLLGACTKQGGPLMVIVEYCKYGNLSNYLKSKRDLFFLNKDAALHMEPKKEKMEPGLEQGKKPRLDSVTSSESFASSGFQEDKSLSDVEEEEDSDGFYKEPITMEDLISYSFQVARGMEFLSSRKCIHRDLAARNILLSENNVVKICDFGLARDIYKNPDYVRKGDTRLPLKWMAPESIFDKIYSTKSDVWSYGVLLWEIFSLGGSPYPGVQMDEDFCSRLREGMRMRAPEYSTPEIYQIMLDCWHRDPKERPRFAELVEKLGDLLQANVQQDGKDYIPINAILTGNSGFTYSTPAFSEDFFKESISAPKFNSGSSDDVRYVNAFKFMSLERIKTFEELLPNATSMFDDYQGDSSTLLASPMLKRFTWTDSKPKASLKIDLRVTSKSKESGLSDVSRPSFCHSSCGHVSEGKRRFTYDHAELERKIACCSPPPDYNSVVLYSTPPI</sequence>
<feature type="signal peptide" evidence="33">
    <location>
        <begin position="1"/>
        <end position="26"/>
    </location>
</feature>
<feature type="chain" id="PRO_0000016768" description="Vascular endothelial growth factor receptor 1">
    <location>
        <begin position="27"/>
        <end position="1338"/>
    </location>
</feature>
<feature type="topological domain" description="Extracellular" evidence="3">
    <location>
        <begin position="27"/>
        <end position="758"/>
    </location>
</feature>
<feature type="transmembrane region" description="Helical" evidence="3">
    <location>
        <begin position="759"/>
        <end position="780"/>
    </location>
</feature>
<feature type="topological domain" description="Cytoplasmic" evidence="3">
    <location>
        <begin position="781"/>
        <end position="1338"/>
    </location>
</feature>
<feature type="domain" description="Ig-like C2-type 1">
    <location>
        <begin position="32"/>
        <end position="123"/>
    </location>
</feature>
<feature type="domain" description="Ig-like C2-type 2">
    <location>
        <begin position="151"/>
        <end position="214"/>
    </location>
</feature>
<feature type="domain" description="Ig-like C2-type 3">
    <location>
        <begin position="230"/>
        <end position="327"/>
    </location>
</feature>
<feature type="domain" description="Ig-like C2-type 4">
    <location>
        <begin position="335"/>
        <end position="421"/>
    </location>
</feature>
<feature type="domain" description="Ig-like C2-type 5">
    <location>
        <begin position="428"/>
        <end position="553"/>
    </location>
</feature>
<feature type="domain" description="Ig-like C2-type 6">
    <location>
        <begin position="556"/>
        <end position="654"/>
    </location>
</feature>
<feature type="domain" description="Ig-like C2-type 7">
    <location>
        <begin position="661"/>
        <end position="747"/>
    </location>
</feature>
<feature type="domain" description="Protein kinase" evidence="5">
    <location>
        <begin position="827"/>
        <end position="1158"/>
    </location>
</feature>
<feature type="region of interest" description="Disordered" evidence="7">
    <location>
        <begin position="940"/>
        <end position="982"/>
    </location>
</feature>
<feature type="compositionally biased region" description="Basic and acidic residues" evidence="7">
    <location>
        <begin position="940"/>
        <end position="957"/>
    </location>
</feature>
<feature type="compositionally biased region" description="Polar residues" evidence="7">
    <location>
        <begin position="959"/>
        <end position="971"/>
    </location>
</feature>
<feature type="active site" description="Proton acceptor" evidence="5 6">
    <location>
        <position position="1022"/>
    </location>
</feature>
<feature type="binding site" evidence="5">
    <location>
        <begin position="833"/>
        <end position="841"/>
    </location>
    <ligand>
        <name>ATP</name>
        <dbReference type="ChEBI" id="CHEBI:30616"/>
    </ligand>
</feature>
<feature type="binding site" evidence="5">
    <location>
        <position position="861"/>
    </location>
    <ligand>
        <name>ATP</name>
        <dbReference type="ChEBI" id="CHEBI:30616"/>
    </ligand>
</feature>
<feature type="site" description="Cleavage; by PSEN1" evidence="47">
    <location>
        <begin position="767"/>
        <end position="768"/>
    </location>
</feature>
<feature type="modified residue" description="Phosphotyrosine; by autocatalysis" evidence="48">
    <location>
        <position position="914"/>
    </location>
</feature>
<feature type="modified residue" description="Phosphotyrosine; by autocatalysis" evidence="1">
    <location>
        <position position="1053"/>
    </location>
</feature>
<feature type="modified residue" description="Phosphotyrosine; by autocatalysis" evidence="35">
    <location>
        <position position="1169"/>
    </location>
</feature>
<feature type="modified residue" description="Phosphotyrosine; by autocatalysis" evidence="12 14 35 37 38">
    <location>
        <position position="1213"/>
    </location>
</feature>
<feature type="modified residue" description="Phosphotyrosine; by autocatalysis" evidence="38">
    <location>
        <position position="1242"/>
    </location>
</feature>
<feature type="modified residue" description="Phosphotyrosine; by autocatalysis" evidence="14">
    <location>
        <position position="1309"/>
    </location>
</feature>
<feature type="modified residue" description="Phosphotyrosine; by autocatalysis" evidence="14 38">
    <location>
        <position position="1327"/>
    </location>
</feature>
<feature type="modified residue" description="Phosphotyrosine; by autocatalysis" evidence="38">
    <location>
        <position position="1333"/>
    </location>
</feature>
<feature type="glycosylation site" description="N-linked (GlcNAc...) asparagine" evidence="3">
    <location>
        <position position="100"/>
    </location>
</feature>
<feature type="glycosylation site" description="N-linked (GlcNAc...) asparagine" evidence="3">
    <location>
        <position position="164"/>
    </location>
</feature>
<feature type="glycosylation site" description="N-linked (GlcNAc...) asparagine" evidence="3">
    <location>
        <position position="196"/>
    </location>
</feature>
<feature type="glycosylation site" description="N-linked (GlcNAc...) asparagine" evidence="3">
    <location>
        <position position="251"/>
    </location>
</feature>
<feature type="glycosylation site" description="N-linked (GlcNAc...) asparagine" evidence="3">
    <location>
        <position position="323"/>
    </location>
</feature>
<feature type="glycosylation site" description="N-linked (GlcNAc...) asparagine" evidence="3">
    <location>
        <position position="402"/>
    </location>
</feature>
<feature type="glycosylation site" description="N-linked (GlcNAc...) asparagine" evidence="3">
    <location>
        <position position="417"/>
    </location>
</feature>
<feature type="glycosylation site" description="N-linked (GlcNAc...) asparagine" evidence="3">
    <location>
        <position position="474"/>
    </location>
</feature>
<feature type="glycosylation site" description="N-linked (GlcNAc...) asparagine" evidence="3">
    <location>
        <position position="547"/>
    </location>
</feature>
<feature type="glycosylation site" description="N-linked (GlcNAc...) asparagine" evidence="3">
    <location>
        <position position="597"/>
    </location>
</feature>
<feature type="glycosylation site" description="N-linked (GlcNAc...) asparagine" evidence="3">
    <location>
        <position position="620"/>
    </location>
</feature>
<feature type="glycosylation site" description="N-linked (GlcNAc...) asparagine" evidence="3">
    <location>
        <position position="625"/>
    </location>
</feature>
<feature type="glycosylation site" description="N-linked (GlcNAc...) asparagine" evidence="3">
    <location>
        <position position="666"/>
    </location>
</feature>
<feature type="disulfide bond" evidence="4">
    <location>
        <begin position="53"/>
        <end position="107"/>
    </location>
</feature>
<feature type="disulfide bond">
    <location>
        <begin position="158"/>
        <end position="207"/>
    </location>
</feature>
<feature type="disulfide bond" evidence="4">
    <location>
        <begin position="252"/>
        <end position="311"/>
    </location>
</feature>
<feature type="disulfide bond" evidence="4">
    <location>
        <begin position="454"/>
        <end position="535"/>
    </location>
</feature>
<feature type="disulfide bond" evidence="4">
    <location>
        <begin position="577"/>
        <end position="636"/>
    </location>
</feature>
<feature type="disulfide bond" evidence="4">
    <location>
        <begin position="682"/>
        <end position="731"/>
    </location>
</feature>
<feature type="splice variant" id="VSP_041983" description="In isoform 7." evidence="44">
    <location>
        <begin position="1"/>
        <end position="995"/>
    </location>
</feature>
<feature type="splice variant" id="VSP_041984" description="In isoform 6." evidence="44">
    <location>
        <begin position="1"/>
        <end position="875"/>
    </location>
</feature>
<feature type="splice variant" id="VSP_041985" description="In isoform 5." evidence="44">
    <location>
        <begin position="1"/>
        <end position="782"/>
    </location>
</feature>
<feature type="splice variant" id="VSP_047759" description="In isoform 8." evidence="44">
    <original>MVSYWDT</original>
    <variation>MNSDLLV</variation>
    <location>
        <begin position="1"/>
        <end position="7"/>
    </location>
</feature>
<feature type="splice variant" id="VSP_047760" description="In isoform 8." evidence="44">
    <location>
        <begin position="8"/>
        <end position="984"/>
    </location>
</feature>
<feature type="splice variant" id="VSP_041929" description="In isoform 4." evidence="43">
    <original>MASTLVVADSRISGIYICIASNKV</original>
    <variation>LPPANSSFMLPPTSFSSNYFHFLP</variation>
    <location>
        <begin position="518"/>
        <end position="541"/>
    </location>
</feature>
<feature type="splice variant" id="VSP_041930" description="In isoform 4." evidence="43">
    <location>
        <begin position="542"/>
        <end position="1338"/>
    </location>
</feature>
<feature type="splice variant" id="VSP_002955" description="In isoform 2." evidence="40 41 45">
    <original>DQEAPYLLRNLSDHTVAISSSTTLDCHANGV</original>
    <variation>GEHCNKKAVFSRISKFKSTRNDCTTQSNVKH</variation>
    <location>
        <begin position="657"/>
        <end position="687"/>
    </location>
</feature>
<feature type="splice variant" id="VSP_002956" description="In isoform 2." evidence="40 41 45">
    <location>
        <begin position="688"/>
        <end position="1338"/>
    </location>
</feature>
<feature type="splice variant" id="VSP_041927" description="In isoform 3." evidence="40 42 46">
    <original>GIILGPGSSTLFIERVTEEDEGVYHCKA</original>
    <variation>ELYTSTSPSSSSSSPLSSSSSSSSSSSS</variation>
    <location>
        <begin position="706"/>
        <end position="733"/>
    </location>
</feature>
<feature type="splice variant" id="VSP_041928" description="In isoform 3." evidence="40 42 46">
    <location>
        <begin position="734"/>
        <end position="1338"/>
    </location>
</feature>
<feature type="sequence variant" id="VAR_042045" description="In dbSNP:rs56409818." evidence="21">
    <original>K</original>
    <variation>T</variation>
    <location>
        <position position="60"/>
    </location>
</feature>
<feature type="sequence variant" id="VAR_049719" description="In dbSNP:rs35073261.">
    <original>I</original>
    <variation>L</variation>
    <location>
        <position position="128"/>
    </location>
</feature>
<feature type="sequence variant" id="VAR_042046" description="In dbSNP:rs55974987." evidence="21">
    <original>E</original>
    <variation>K</variation>
    <location>
        <position position="144"/>
    </location>
</feature>
<feature type="sequence variant" id="VAR_042047" description="In dbSNP:rs55687105." evidence="21">
    <original>R</original>
    <variation>Q</variation>
    <location>
        <position position="281"/>
    </location>
</feature>
<feature type="sequence variant" id="VAR_042048" description="In a lung adenocarcinoma sample; somatic mutation; dbSNP:rs2137539590." evidence="21">
    <original>L</original>
    <variation>I</variation>
    <location>
        <position position="422"/>
    </location>
</feature>
<feature type="sequence variant" id="VAR_042049" description="In a glioma low grade oligodendroglioma sample; somatic mutation; dbSNP:rs553261958." evidence="21">
    <original>R</original>
    <variation>Q</variation>
    <location>
        <position position="781"/>
    </location>
</feature>
<feature type="sequence variant" id="VAR_042050" description="In dbSNP:rs35549791." evidence="21">
    <original>M</original>
    <variation>V</variation>
    <location>
        <position position="938"/>
    </location>
</feature>
<feature type="sequence variant" id="VAR_042051" description="In dbSNP:rs35832528." evidence="21">
    <original>E</original>
    <variation>A</variation>
    <location>
        <position position="982"/>
    </location>
</feature>
<feature type="sequence variant" id="VAR_042052" description="In a bladder transitional cell carcinoma sample; somatic mutation; dbSNP:rs2138826873." evidence="21">
    <original>L</original>
    <variation>V</variation>
    <location>
        <position position="1061"/>
    </location>
</feature>
<feature type="mutagenesis site" description="Abolishes proteolytic cleavage by PSEN1." evidence="31">
    <original>V</original>
    <variation>A</variation>
    <location>
        <position position="767"/>
    </location>
</feature>
<feature type="mutagenesis site" description="Abolishes enzyme activity. Abolishes interaction with PLCG." evidence="35">
    <original>K</original>
    <variation>M</variation>
    <location>
        <position position="861"/>
    </location>
</feature>
<feature type="mutagenesis site" description="Reduces phosphorylation at other tyrosine residues." evidence="38">
    <original>Y</original>
    <variation>F</variation>
    <location>
        <position position="914"/>
    </location>
</feature>
<feature type="mutagenesis site" description="Strongly increases kinase activity. Increases activity in promoting proliferation of endothelial cells." evidence="19">
    <original>N</original>
    <variation>D</variation>
    <location>
        <position position="1050"/>
    </location>
</feature>
<feature type="mutagenesis site" description="Loss of phosphorylation site. Abolishes interaction with PLCG." evidence="35">
    <original>Y</original>
    <variation>F</variation>
    <location>
        <position position="1169"/>
    </location>
</feature>
<feature type="mutagenesis site" description="Loss of phosphorylation site. Abolishes interaction with PIK3R1." evidence="38">
    <original>Y</original>
    <variation>F</variation>
    <location>
        <position position="1213"/>
    </location>
</feature>
<feature type="mutagenesis site" description="Loss of phosphorylation site." evidence="38">
    <original>Y</original>
    <variation>F</variation>
    <location>
        <position position="1242"/>
    </location>
</feature>
<feature type="mutagenesis site" description="Loss of phosphorylation site." evidence="38">
    <original>Y</original>
    <variation>F</variation>
    <location>
        <position position="1327"/>
    </location>
</feature>
<feature type="mutagenesis site" description="Loss of phosphorylation site. Abolishes interaction with CBL." evidence="17 38">
    <original>Y</original>
    <variation>F</variation>
    <location>
        <position position="1333"/>
    </location>
</feature>
<feature type="sequence conflict" description="In Ref. 3; AAC16449." evidence="47" ref="3">
    <original>F</original>
    <variation>S</variation>
    <location>
        <position position="490"/>
    </location>
</feature>
<feature type="sequence conflict" description="In Ref. 1; CAA35946." evidence="47" ref="1">
    <original>F</original>
    <variation>L</variation>
    <location>
        <position position="779"/>
    </location>
</feature>
<feature type="sequence conflict" description="In Ref. 6; ABI53803/ABI53804." evidence="47" ref="6">
    <original>L</original>
    <variation>F</variation>
    <location>
        <position position="1029"/>
    </location>
</feature>
<feature type="turn" evidence="50">
    <location>
        <begin position="130"/>
        <end position="132"/>
    </location>
</feature>
<feature type="strand" evidence="49">
    <location>
        <begin position="135"/>
        <end position="137"/>
    </location>
</feature>
<feature type="strand" evidence="53">
    <location>
        <begin position="140"/>
        <end position="142"/>
    </location>
</feature>
<feature type="strand" evidence="49">
    <location>
        <begin position="144"/>
        <end position="148"/>
    </location>
</feature>
<feature type="strand" evidence="51">
    <location>
        <begin position="150"/>
        <end position="152"/>
    </location>
</feature>
<feature type="strand" evidence="49">
    <location>
        <begin position="154"/>
        <end position="156"/>
    </location>
</feature>
<feature type="strand" evidence="54">
    <location>
        <begin position="160"/>
        <end position="162"/>
    </location>
</feature>
<feature type="helix" evidence="50">
    <location>
        <begin position="163"/>
        <end position="165"/>
    </location>
</feature>
<feature type="strand" evidence="49">
    <location>
        <begin position="168"/>
        <end position="171"/>
    </location>
</feature>
<feature type="turn" evidence="49">
    <location>
        <begin position="172"/>
        <end position="174"/>
    </location>
</feature>
<feature type="strand" evidence="49">
    <location>
        <begin position="175"/>
        <end position="177"/>
    </location>
</feature>
<feature type="strand" evidence="49">
    <location>
        <begin position="181"/>
        <end position="187"/>
    </location>
</feature>
<feature type="turn" evidence="49">
    <location>
        <begin position="188"/>
        <end position="190"/>
    </location>
</feature>
<feature type="strand" evidence="49">
    <location>
        <begin position="191"/>
        <end position="196"/>
    </location>
</feature>
<feature type="helix" evidence="49">
    <location>
        <begin position="199"/>
        <end position="201"/>
    </location>
</feature>
<feature type="strand" evidence="49">
    <location>
        <begin position="203"/>
        <end position="211"/>
    </location>
</feature>
<feature type="strand" evidence="49">
    <location>
        <begin position="214"/>
        <end position="224"/>
    </location>
</feature>
<feature type="helix" evidence="52">
    <location>
        <begin position="806"/>
        <end position="809"/>
    </location>
</feature>
<feature type="helix" evidence="52">
    <location>
        <begin position="817"/>
        <end position="820"/>
    </location>
</feature>
<feature type="helix" evidence="52">
    <location>
        <begin position="824"/>
        <end position="826"/>
    </location>
</feature>
<feature type="strand" evidence="52">
    <location>
        <begin position="827"/>
        <end position="835"/>
    </location>
</feature>
<feature type="strand" evidence="52">
    <location>
        <begin position="837"/>
        <end position="848"/>
    </location>
</feature>
<feature type="helix" evidence="52">
    <location>
        <begin position="849"/>
        <end position="851"/>
    </location>
</feature>
<feature type="strand" evidence="52">
    <location>
        <begin position="854"/>
        <end position="863"/>
    </location>
</feature>
<feature type="helix" evidence="52">
    <location>
        <begin position="869"/>
        <end position="883"/>
    </location>
</feature>
<feature type="strand" evidence="52">
    <location>
        <begin position="894"/>
        <end position="898"/>
    </location>
</feature>
<feature type="strand" evidence="52">
    <location>
        <begin position="906"/>
        <end position="910"/>
    </location>
</feature>
<feature type="helix" evidence="52">
    <location>
        <begin position="917"/>
        <end position="922"/>
    </location>
</feature>
<feature type="helix" evidence="52">
    <location>
        <begin position="996"/>
        <end position="1014"/>
    </location>
</feature>
<feature type="turn" evidence="52">
    <location>
        <begin position="1015"/>
        <end position="1017"/>
    </location>
</feature>
<feature type="helix" evidence="52">
    <location>
        <begin position="1025"/>
        <end position="1027"/>
    </location>
</feature>
<feature type="strand" evidence="52">
    <location>
        <begin position="1028"/>
        <end position="1030"/>
    </location>
</feature>
<feature type="helix" evidence="52">
    <location>
        <begin position="1032"/>
        <end position="1034"/>
    </location>
</feature>
<feature type="strand" evidence="52">
    <location>
        <begin position="1036"/>
        <end position="1038"/>
    </location>
</feature>
<feature type="helix" evidence="52">
    <location>
        <begin position="1042"/>
        <end position="1044"/>
    </location>
</feature>
<feature type="turn" evidence="52">
    <location>
        <begin position="1047"/>
        <end position="1049"/>
    </location>
</feature>
<feature type="strand" evidence="52">
    <location>
        <begin position="1053"/>
        <end position="1055"/>
    </location>
</feature>
<feature type="helix" evidence="52">
    <location>
        <begin position="1063"/>
        <end position="1065"/>
    </location>
</feature>
<feature type="helix" evidence="52">
    <location>
        <begin position="1068"/>
        <end position="1073"/>
    </location>
</feature>
<feature type="helix" evidence="52">
    <location>
        <begin position="1078"/>
        <end position="1093"/>
    </location>
</feature>
<feature type="helix" evidence="52">
    <location>
        <begin position="1107"/>
        <end position="1113"/>
    </location>
</feature>
<feature type="turn" evidence="52">
    <location>
        <begin position="1114"/>
        <end position="1116"/>
    </location>
</feature>
<feature type="helix" evidence="52">
    <location>
        <begin position="1127"/>
        <end position="1136"/>
    </location>
</feature>
<feature type="helix" evidence="52">
    <location>
        <begin position="1141"/>
        <end position="1143"/>
    </location>
</feature>
<feature type="helix" evidence="52">
    <location>
        <begin position="1147"/>
        <end position="1157"/>
    </location>
</feature>
<evidence type="ECO:0000250" key="1"/>
<evidence type="ECO:0000250" key="2">
    <source>
        <dbReference type="UniProtKB" id="P35969"/>
    </source>
</evidence>
<evidence type="ECO:0000255" key="3"/>
<evidence type="ECO:0000255" key="4">
    <source>
        <dbReference type="PROSITE-ProRule" id="PRU00114"/>
    </source>
</evidence>
<evidence type="ECO:0000255" key="5">
    <source>
        <dbReference type="PROSITE-ProRule" id="PRU00159"/>
    </source>
</evidence>
<evidence type="ECO:0000255" key="6">
    <source>
        <dbReference type="PROSITE-ProRule" id="PRU10028"/>
    </source>
</evidence>
<evidence type="ECO:0000256" key="7">
    <source>
        <dbReference type="SAM" id="MobiDB-lite"/>
    </source>
</evidence>
<evidence type="ECO:0000269" key="8">
    <source>
    </source>
</evidence>
<evidence type="ECO:0000269" key="9">
    <source>
    </source>
</evidence>
<evidence type="ECO:0000269" key="10">
    <source>
    </source>
</evidence>
<evidence type="ECO:0000269" key="11">
    <source>
    </source>
</evidence>
<evidence type="ECO:0000269" key="12">
    <source>
    </source>
</evidence>
<evidence type="ECO:0000269" key="13">
    <source>
    </source>
</evidence>
<evidence type="ECO:0000269" key="14">
    <source>
    </source>
</evidence>
<evidence type="ECO:0000269" key="15">
    <source>
    </source>
</evidence>
<evidence type="ECO:0000269" key="16">
    <source>
    </source>
</evidence>
<evidence type="ECO:0000269" key="17">
    <source>
    </source>
</evidence>
<evidence type="ECO:0000269" key="18">
    <source>
    </source>
</evidence>
<evidence type="ECO:0000269" key="19">
    <source>
    </source>
</evidence>
<evidence type="ECO:0000269" key="20">
    <source>
    </source>
</evidence>
<evidence type="ECO:0000269" key="21">
    <source>
    </source>
</evidence>
<evidence type="ECO:0000269" key="22">
    <source>
    </source>
</evidence>
<evidence type="ECO:0000269" key="23">
    <source>
    </source>
</evidence>
<evidence type="ECO:0000269" key="24">
    <source>
    </source>
</evidence>
<evidence type="ECO:0000269" key="25">
    <source>
    </source>
</evidence>
<evidence type="ECO:0000269" key="26">
    <source>
    </source>
</evidence>
<evidence type="ECO:0000269" key="27">
    <source>
    </source>
</evidence>
<evidence type="ECO:0000269" key="28">
    <source>
    </source>
</evidence>
<evidence type="ECO:0000269" key="29">
    <source>
    </source>
</evidence>
<evidence type="ECO:0000269" key="30">
    <source>
    </source>
</evidence>
<evidence type="ECO:0000269" key="31">
    <source>
    </source>
</evidence>
<evidence type="ECO:0000269" key="32">
    <source>
    </source>
</evidence>
<evidence type="ECO:0000269" key="33">
    <source>
    </source>
</evidence>
<evidence type="ECO:0000269" key="34">
    <source>
    </source>
</evidence>
<evidence type="ECO:0000269" key="35">
    <source>
    </source>
</evidence>
<evidence type="ECO:0000269" key="36">
    <source>
    </source>
</evidence>
<evidence type="ECO:0000269" key="37">
    <source>
    </source>
</evidence>
<evidence type="ECO:0000269" key="38">
    <source>
    </source>
</evidence>
<evidence type="ECO:0000269" key="39">
    <source ref="11"/>
</evidence>
<evidence type="ECO:0000303" key="40">
    <source>
    </source>
</evidence>
<evidence type="ECO:0000303" key="41">
    <source>
    </source>
</evidence>
<evidence type="ECO:0000303" key="42">
    <source>
    </source>
</evidence>
<evidence type="ECO:0000303" key="43">
    <source>
    </source>
</evidence>
<evidence type="ECO:0000303" key="44">
    <source>
    </source>
</evidence>
<evidence type="ECO:0000303" key="45">
    <source>
    </source>
</evidence>
<evidence type="ECO:0000303" key="46">
    <source ref="7"/>
</evidence>
<evidence type="ECO:0000305" key="47"/>
<evidence type="ECO:0000305" key="48">
    <source>
    </source>
</evidence>
<evidence type="ECO:0007829" key="49">
    <source>
        <dbReference type="PDB" id="1FLT"/>
    </source>
</evidence>
<evidence type="ECO:0007829" key="50">
    <source>
        <dbReference type="PDB" id="1QSV"/>
    </source>
</evidence>
<evidence type="ECO:0007829" key="51">
    <source>
        <dbReference type="PDB" id="1QSZ"/>
    </source>
</evidence>
<evidence type="ECO:0007829" key="52">
    <source>
        <dbReference type="PDB" id="3HNG"/>
    </source>
</evidence>
<evidence type="ECO:0007829" key="53">
    <source>
        <dbReference type="PDB" id="4CL7"/>
    </source>
</evidence>
<evidence type="ECO:0007829" key="54">
    <source>
        <dbReference type="PDB" id="5ABD"/>
    </source>
</evidence>
<keyword id="KW-0002">3D-structure</keyword>
<keyword id="KW-0025">Alternative splicing</keyword>
<keyword id="KW-0037">Angiogenesis</keyword>
<keyword id="KW-0067">ATP-binding</keyword>
<keyword id="KW-1003">Cell membrane</keyword>
<keyword id="KW-0145">Chemotaxis</keyword>
<keyword id="KW-0963">Cytoplasm</keyword>
<keyword id="KW-0217">Developmental protein</keyword>
<keyword id="KW-0221">Differentiation</keyword>
<keyword id="KW-0903">Direct protein sequencing</keyword>
<keyword id="KW-1015">Disulfide bond</keyword>
<keyword id="KW-0967">Endosome</keyword>
<keyword id="KW-0325">Glycoprotein</keyword>
<keyword id="KW-0393">Immunoglobulin domain</keyword>
<keyword id="KW-0418">Kinase</keyword>
<keyword id="KW-0472">Membrane</keyword>
<keyword id="KW-0547">Nucleotide-binding</keyword>
<keyword id="KW-0597">Phosphoprotein</keyword>
<keyword id="KW-1267">Proteomics identification</keyword>
<keyword id="KW-0675">Receptor</keyword>
<keyword id="KW-1185">Reference proteome</keyword>
<keyword id="KW-0677">Repeat</keyword>
<keyword id="KW-0964">Secreted</keyword>
<keyword id="KW-0732">Signal</keyword>
<keyword id="KW-0808">Transferase</keyword>
<keyword id="KW-0812">Transmembrane</keyword>
<keyword id="KW-1133">Transmembrane helix</keyword>
<keyword id="KW-0829">Tyrosine-protein kinase</keyword>
<keyword id="KW-0832">Ubl conjugation</keyword>
<dbReference type="EC" id="2.7.10.1"/>
<dbReference type="EMBL" id="X51602">
    <property type="protein sequence ID" value="CAA35946.1"/>
    <property type="molecule type" value="mRNA"/>
</dbReference>
<dbReference type="EMBL" id="U01134">
    <property type="protein sequence ID" value="AAC50060.1"/>
    <property type="molecule type" value="mRNA"/>
</dbReference>
<dbReference type="EMBL" id="AF063657">
    <property type="protein sequence ID" value="AAC16449.2"/>
    <property type="molecule type" value="mRNA"/>
</dbReference>
<dbReference type="EMBL" id="EU826561">
    <property type="protein sequence ID" value="ACF47597.1"/>
    <property type="molecule type" value="mRNA"/>
</dbReference>
<dbReference type="EMBL" id="EU368830">
    <property type="protein sequence ID" value="ACA62948.1"/>
    <property type="molecule type" value="mRNA"/>
</dbReference>
<dbReference type="EMBL" id="DQ836394">
    <property type="protein sequence ID" value="ABI53803.1"/>
    <property type="molecule type" value="mRNA"/>
</dbReference>
<dbReference type="EMBL" id="DQ836395">
    <property type="protein sequence ID" value="ABI53804.1"/>
    <property type="molecule type" value="mRNA"/>
</dbReference>
<dbReference type="EMBL" id="DQ836396">
    <property type="protein sequence ID" value="ABI53805.1"/>
    <property type="molecule type" value="mRNA"/>
</dbReference>
<dbReference type="EMBL" id="EF491868">
    <property type="protein sequence ID" value="ABS32268.1"/>
    <property type="molecule type" value="mRNA"/>
</dbReference>
<dbReference type="EMBL" id="EF491869">
    <property type="protein sequence ID" value="ABS32269.1"/>
    <property type="molecule type" value="mRNA"/>
</dbReference>
<dbReference type="EMBL" id="EF491870">
    <property type="protein sequence ID" value="ABS32270.1"/>
    <property type="molecule type" value="mRNA"/>
</dbReference>
<dbReference type="EMBL" id="EU360600">
    <property type="protein sequence ID" value="ACB05747.1"/>
    <property type="molecule type" value="mRNA"/>
</dbReference>
<dbReference type="EMBL" id="EU332841">
    <property type="protein sequence ID" value="ABY87530.1"/>
    <property type="molecule type" value="Genomic_DNA"/>
</dbReference>
<dbReference type="EMBL" id="AK292936">
    <property type="protein sequence ID" value="BAF85625.1"/>
    <property type="molecule type" value="mRNA"/>
</dbReference>
<dbReference type="EMBL" id="AK300392">
    <property type="protein sequence ID" value="BAG62125.1"/>
    <property type="molecule type" value="mRNA"/>
</dbReference>
<dbReference type="EMBL" id="AL138712">
    <property type="status" value="NOT_ANNOTATED_CDS"/>
    <property type="molecule type" value="Genomic_DNA"/>
</dbReference>
<dbReference type="EMBL" id="AL139005">
    <property type="status" value="NOT_ANNOTATED_CDS"/>
    <property type="molecule type" value="Genomic_DNA"/>
</dbReference>
<dbReference type="EMBL" id="CH471075">
    <property type="protein sequence ID" value="EAX08431.1"/>
    <property type="molecule type" value="Genomic_DNA"/>
</dbReference>
<dbReference type="EMBL" id="CH471075">
    <property type="protein sequence ID" value="EAX08432.1"/>
    <property type="molecule type" value="Genomic_DNA"/>
</dbReference>
<dbReference type="EMBL" id="BC039007">
    <property type="protein sequence ID" value="AAH39007.1"/>
    <property type="molecule type" value="mRNA"/>
</dbReference>
<dbReference type="EMBL" id="D00133">
    <property type="protein sequence ID" value="BAA00080.1"/>
    <property type="molecule type" value="Genomic_DNA"/>
</dbReference>
<dbReference type="CCDS" id="CCDS53860.1">
    <molecule id="P17948-3"/>
</dbReference>
<dbReference type="CCDS" id="CCDS53861.1">
    <molecule id="P17948-4"/>
</dbReference>
<dbReference type="CCDS" id="CCDS73556.1">
    <molecule id="P17948-2"/>
</dbReference>
<dbReference type="CCDS" id="CCDS9330.1">
    <molecule id="P17948-1"/>
</dbReference>
<dbReference type="PIR" id="A49636">
    <property type="entry name" value="A49636"/>
</dbReference>
<dbReference type="PIR" id="S09982">
    <property type="entry name" value="S09982"/>
</dbReference>
<dbReference type="RefSeq" id="NP_001153392.1">
    <molecule id="P17948-2"/>
    <property type="nucleotide sequence ID" value="NM_001159920.2"/>
</dbReference>
<dbReference type="RefSeq" id="NP_001153502.1">
    <molecule id="P17948-3"/>
    <property type="nucleotide sequence ID" value="NM_001160030.2"/>
</dbReference>
<dbReference type="RefSeq" id="NP_001153503.1">
    <molecule id="P17948-4"/>
    <property type="nucleotide sequence ID" value="NM_001160031.1"/>
</dbReference>
<dbReference type="RefSeq" id="NP_002010.2">
    <molecule id="P17948-1"/>
    <property type="nucleotide sequence ID" value="NM_002019.4"/>
</dbReference>
<dbReference type="PDB" id="1FLT">
    <property type="method" value="X-ray"/>
    <property type="resolution" value="1.70 A"/>
    <property type="chains" value="X/Y=132-226"/>
</dbReference>
<dbReference type="PDB" id="1QSV">
    <property type="method" value="NMR"/>
    <property type="chains" value="A=129-229"/>
</dbReference>
<dbReference type="PDB" id="1QSZ">
    <property type="method" value="NMR"/>
    <property type="chains" value="A=129-229"/>
</dbReference>
<dbReference type="PDB" id="1QTY">
    <property type="method" value="X-ray"/>
    <property type="resolution" value="2.70 A"/>
    <property type="chains" value="T/U/X/Y=129-229"/>
</dbReference>
<dbReference type="PDB" id="1RV6">
    <property type="method" value="X-ray"/>
    <property type="resolution" value="2.45 A"/>
    <property type="chains" value="X/Y=130-229"/>
</dbReference>
<dbReference type="PDB" id="2XAC">
    <property type="method" value="X-ray"/>
    <property type="resolution" value="2.71 A"/>
    <property type="chains" value="C/X=129-226"/>
</dbReference>
<dbReference type="PDB" id="3HNG">
    <property type="method" value="X-ray"/>
    <property type="resolution" value="2.70 A"/>
    <property type="chains" value="A=801-1158"/>
</dbReference>
<dbReference type="PDB" id="4CKV">
    <property type="method" value="X-ray"/>
    <property type="resolution" value="2.06 A"/>
    <property type="chains" value="X=132-225"/>
</dbReference>
<dbReference type="PDB" id="4CL7">
    <property type="method" value="X-ray"/>
    <property type="resolution" value="2.00 A"/>
    <property type="chains" value="A/B/C/D=132-225"/>
</dbReference>
<dbReference type="PDB" id="5ABD">
    <property type="method" value="X-ray"/>
    <property type="resolution" value="2.00 A"/>
    <property type="chains" value="E/I/X=132-226"/>
</dbReference>
<dbReference type="PDB" id="5EX3">
    <property type="method" value="X-ray"/>
    <property type="resolution" value="2.41 A"/>
    <property type="chains" value="D=827-835"/>
</dbReference>
<dbReference type="PDB" id="5T89">
    <property type="method" value="X-ray"/>
    <property type="resolution" value="4.00 A"/>
    <property type="chains" value="X/Y=27-656"/>
</dbReference>
<dbReference type="PDBsum" id="1FLT"/>
<dbReference type="PDBsum" id="1QSV"/>
<dbReference type="PDBsum" id="1QSZ"/>
<dbReference type="PDBsum" id="1QTY"/>
<dbReference type="PDBsum" id="1RV6"/>
<dbReference type="PDBsum" id="2XAC"/>
<dbReference type="PDBsum" id="3HNG"/>
<dbReference type="PDBsum" id="4CKV"/>
<dbReference type="PDBsum" id="4CL7"/>
<dbReference type="PDBsum" id="5ABD"/>
<dbReference type="PDBsum" id="5EX3"/>
<dbReference type="PDBsum" id="5T89"/>
<dbReference type="SMR" id="P17948"/>
<dbReference type="BioGRID" id="108609">
    <property type="interactions" value="195"/>
</dbReference>
<dbReference type="CORUM" id="P17948"/>
<dbReference type="DIP" id="DIP-643N"/>
<dbReference type="FunCoup" id="P17948">
    <property type="interactions" value="1409"/>
</dbReference>
<dbReference type="IntAct" id="P17948">
    <property type="interactions" value="182"/>
</dbReference>
<dbReference type="MINT" id="P17948"/>
<dbReference type="STRING" id="9606.ENSP00000282397"/>
<dbReference type="BindingDB" id="P17948"/>
<dbReference type="ChEMBL" id="CHEMBL1868"/>
<dbReference type="DrugBank" id="DB06626">
    <property type="generic name" value="Axitinib"/>
</dbReference>
<dbReference type="DrugBank" id="DB05932">
    <property type="generic name" value="Denibulin"/>
</dbReference>
<dbReference type="DrugBank" id="DB11741">
    <property type="generic name" value="Famitinib"/>
</dbReference>
<dbReference type="DrugBank" id="DB10770">
    <property type="generic name" value="Foreskin fibroblast (neonatal)"/>
</dbReference>
<dbReference type="DrugBank" id="DB12010">
    <property type="generic name" value="Fostamatinib"/>
</dbReference>
<dbReference type="DrugBank" id="DB11679">
    <property type="generic name" value="Fruquintinib"/>
</dbReference>
<dbReference type="DrugBank" id="DB06101">
    <property type="generic name" value="IMC-1C11"/>
</dbReference>
<dbReference type="DrugBank" id="DB07664">
    <property type="generic name" value="K-00546"/>
</dbReference>
<dbReference type="DrugBank" id="DB09078">
    <property type="generic name" value="Lenvatinib"/>
</dbReference>
<dbReference type="DrugBank" id="DB06080">
    <property type="generic name" value="Linifanib"/>
</dbReference>
<dbReference type="DrugBank" id="DB11845">
    <property type="generic name" value="Lucitanib"/>
</dbReference>
<dbReference type="DrugBank" id="DB07288">
    <property type="generic name" value="N-(4-chlorophenyl)-2-[(pyridin-4-ylmethyl)amino]benzamide"/>
</dbReference>
<dbReference type="DrugBank" id="DB09079">
    <property type="generic name" value="Nintedanib"/>
</dbReference>
<dbReference type="DrugBank" id="DB05913">
    <property type="generic name" value="OSI-930"/>
</dbReference>
<dbReference type="DrugBank" id="DB06589">
    <property type="generic name" value="Pazopanib"/>
</dbReference>
<dbReference type="DrugBank" id="DB09221">
    <property type="generic name" value="Polaprezinc"/>
</dbReference>
<dbReference type="DrugBank" id="DB08896">
    <property type="generic name" value="Regorafenib"/>
</dbReference>
<dbReference type="DrugBank" id="DB15685">
    <property type="generic name" value="Selpercatinib"/>
</dbReference>
<dbReference type="DrugBank" id="DB06436">
    <property type="generic name" value="Semaxanib"/>
</dbReference>
<dbReference type="DrugBank" id="DB00398">
    <property type="generic name" value="Sorafenib"/>
</dbReference>
<dbReference type="DrugBank" id="DB08009">
    <property type="generic name" value="SU-11652"/>
</dbReference>
<dbReference type="DrugBank" id="DB01268">
    <property type="generic name" value="Sunitinib"/>
</dbReference>
<dbReference type="DrugBank" id="DB15106">
    <property type="generic name" value="Surufatinib"/>
</dbReference>
<dbReference type="DrugBank" id="DB05075">
    <property type="generic name" value="TG-100801"/>
</dbReference>
<dbReference type="DrugBank" id="DB11800">
    <property type="generic name" value="Tivozanib"/>
</dbReference>
<dbReference type="DrugBank" id="DB04879">
    <property type="generic name" value="Vatalanib"/>
</dbReference>
<dbReference type="DrugCentral" id="P17948"/>
<dbReference type="GuidetoPHARMACOLOGY" id="1812"/>
<dbReference type="GlyConnect" id="771">
    <property type="glycosylation" value="5 N-Linked glycans (6 sites)"/>
</dbReference>
<dbReference type="GlyCosmos" id="P17948">
    <property type="glycosylation" value="13 sites, 8 glycans"/>
</dbReference>
<dbReference type="GlyGen" id="P17948">
    <property type="glycosylation" value="15 sites, 63 N-linked glycans (9 sites), 1 O-linked glycan (1 site)"/>
</dbReference>
<dbReference type="iPTMnet" id="P17948"/>
<dbReference type="PhosphoSitePlus" id="P17948"/>
<dbReference type="BioMuta" id="FLT1"/>
<dbReference type="DMDM" id="143811474"/>
<dbReference type="CPTAC" id="CPTAC-2819"/>
<dbReference type="CPTAC" id="CPTAC-3174"/>
<dbReference type="jPOST" id="P17948"/>
<dbReference type="MassIVE" id="P17948"/>
<dbReference type="PaxDb" id="9606-ENSP00000282397"/>
<dbReference type="PeptideAtlas" id="P17948"/>
<dbReference type="ProteomicsDB" id="3403"/>
<dbReference type="ProteomicsDB" id="53530">
    <molecule id="P17948-1"/>
</dbReference>
<dbReference type="ProteomicsDB" id="53531">
    <molecule id="P17948-2"/>
</dbReference>
<dbReference type="ProteomicsDB" id="53532">
    <molecule id="P17948-3"/>
</dbReference>
<dbReference type="ProteomicsDB" id="53533">
    <molecule id="P17948-4"/>
</dbReference>
<dbReference type="ProteomicsDB" id="53534">
    <molecule id="P17948-5"/>
</dbReference>
<dbReference type="ProteomicsDB" id="53535">
    <molecule id="P17948-6"/>
</dbReference>
<dbReference type="ProteomicsDB" id="53536">
    <molecule id="P17948-7"/>
</dbReference>
<dbReference type="ABCD" id="P17948">
    <property type="antibodies" value="59 sequenced antibodies"/>
</dbReference>
<dbReference type="Antibodypedia" id="1563">
    <property type="antibodies" value="1689 antibodies from 50 providers"/>
</dbReference>
<dbReference type="DNASU" id="2321"/>
<dbReference type="Ensembl" id="ENST00000282397.9">
    <molecule id="P17948-1"/>
    <property type="protein sequence ID" value="ENSP00000282397.4"/>
    <property type="gene ID" value="ENSG00000102755.13"/>
</dbReference>
<dbReference type="Ensembl" id="ENST00000539099.2">
    <molecule id="P17948-4"/>
    <property type="protein sequence ID" value="ENSP00000442630.1"/>
    <property type="gene ID" value="ENSG00000102755.13"/>
</dbReference>
<dbReference type="Ensembl" id="ENST00000541932.5">
    <molecule id="P17948-3"/>
    <property type="protein sequence ID" value="ENSP00000437631.1"/>
    <property type="gene ID" value="ENSG00000102755.13"/>
</dbReference>
<dbReference type="Ensembl" id="ENST00000615840.5">
    <molecule id="P17948-2"/>
    <property type="protein sequence ID" value="ENSP00000484039.1"/>
    <property type="gene ID" value="ENSG00000102755.13"/>
</dbReference>
<dbReference type="GeneID" id="2321"/>
<dbReference type="KEGG" id="hsa:2321"/>
<dbReference type="MANE-Select" id="ENST00000282397.9">
    <property type="protein sequence ID" value="ENSP00000282397.4"/>
    <property type="RefSeq nucleotide sequence ID" value="NM_002019.4"/>
    <property type="RefSeq protein sequence ID" value="NP_002010.2"/>
</dbReference>
<dbReference type="UCSC" id="uc001usb.4">
    <molecule id="P17948-1"/>
    <property type="organism name" value="human"/>
</dbReference>
<dbReference type="AGR" id="HGNC:3763"/>
<dbReference type="CTD" id="2321"/>
<dbReference type="DisGeNET" id="2321"/>
<dbReference type="GeneCards" id="FLT1"/>
<dbReference type="HGNC" id="HGNC:3763">
    <property type="gene designation" value="FLT1"/>
</dbReference>
<dbReference type="HPA" id="ENSG00000102755">
    <property type="expression patterns" value="Tissue enriched (placenta)"/>
</dbReference>
<dbReference type="MalaCards" id="FLT1"/>
<dbReference type="MIM" id="165070">
    <property type="type" value="gene"/>
</dbReference>
<dbReference type="neXtProt" id="NX_P17948"/>
<dbReference type="OpenTargets" id="ENSG00000102755"/>
<dbReference type="Orphanet" id="275555">
    <property type="disease" value="Preeclampsia"/>
</dbReference>
<dbReference type="PharmGKB" id="PA28180"/>
<dbReference type="VEuPathDB" id="HostDB:ENSG00000102755"/>
<dbReference type="eggNOG" id="KOG0200">
    <property type="taxonomic scope" value="Eukaryota"/>
</dbReference>
<dbReference type="GeneTree" id="ENSGT00940000158713"/>
<dbReference type="HOGENOM" id="CLU_000288_49_4_1"/>
<dbReference type="InParanoid" id="P17948"/>
<dbReference type="OMA" id="SCGHIRP"/>
<dbReference type="OrthoDB" id="10059496at2759"/>
<dbReference type="PAN-GO" id="P17948">
    <property type="GO annotations" value="9 GO annotations based on evolutionary models"/>
</dbReference>
<dbReference type="PhylomeDB" id="P17948"/>
<dbReference type="TreeFam" id="TF325768"/>
<dbReference type="BRENDA" id="2.7.10.1">
    <property type="organism ID" value="2681"/>
</dbReference>
<dbReference type="PathwayCommons" id="P17948"/>
<dbReference type="Reactome" id="R-HSA-194306">
    <property type="pathway name" value="Neurophilin interactions with VEGF and VEGFR"/>
</dbReference>
<dbReference type="Reactome" id="R-HSA-195399">
    <property type="pathway name" value="VEGF binds to VEGFR leading to receptor dimerization"/>
</dbReference>
<dbReference type="SignaLink" id="P17948"/>
<dbReference type="SIGNOR" id="P17948"/>
<dbReference type="BioGRID-ORCS" id="2321">
    <property type="hits" value="10 hits in 1192 CRISPR screens"/>
</dbReference>
<dbReference type="ChiTaRS" id="FLT1">
    <property type="organism name" value="human"/>
</dbReference>
<dbReference type="EvolutionaryTrace" id="P17948"/>
<dbReference type="GeneWiki" id="FLT1"/>
<dbReference type="GenomeRNAi" id="2321"/>
<dbReference type="Pharos" id="P17948">
    <property type="development level" value="Tclin"/>
</dbReference>
<dbReference type="PRO" id="PR:P17948"/>
<dbReference type="Proteomes" id="UP000005640">
    <property type="component" value="Chromosome 13"/>
</dbReference>
<dbReference type="RNAct" id="P17948">
    <property type="molecule type" value="protein"/>
</dbReference>
<dbReference type="Bgee" id="ENSG00000102755">
    <property type="expression patterns" value="Expressed in pericardium and 202 other cell types or tissues"/>
</dbReference>
<dbReference type="ExpressionAtlas" id="P17948">
    <property type="expression patterns" value="baseline and differential"/>
</dbReference>
<dbReference type="GO" id="GO:0015629">
    <property type="term" value="C:actin cytoskeleton"/>
    <property type="evidence" value="ECO:0000314"/>
    <property type="project" value="HPA"/>
</dbReference>
<dbReference type="GO" id="GO:0005829">
    <property type="term" value="C:cytosol"/>
    <property type="evidence" value="ECO:0000314"/>
    <property type="project" value="HPA"/>
</dbReference>
<dbReference type="GO" id="GO:0005768">
    <property type="term" value="C:endosome"/>
    <property type="evidence" value="ECO:0007669"/>
    <property type="project" value="UniProtKB-SubCell"/>
</dbReference>
<dbReference type="GO" id="GO:0005615">
    <property type="term" value="C:extracellular space"/>
    <property type="evidence" value="ECO:0000304"/>
    <property type="project" value="ProtInc"/>
</dbReference>
<dbReference type="GO" id="GO:0005925">
    <property type="term" value="C:focal adhesion"/>
    <property type="evidence" value="ECO:0007005"/>
    <property type="project" value="UniProtKB"/>
</dbReference>
<dbReference type="GO" id="GO:0005886">
    <property type="term" value="C:plasma membrane"/>
    <property type="evidence" value="ECO:0000314"/>
    <property type="project" value="HPA"/>
</dbReference>
<dbReference type="GO" id="GO:0043235">
    <property type="term" value="C:receptor complex"/>
    <property type="evidence" value="ECO:0000314"/>
    <property type="project" value="MGI"/>
</dbReference>
<dbReference type="GO" id="GO:0005524">
    <property type="term" value="F:ATP binding"/>
    <property type="evidence" value="ECO:0007669"/>
    <property type="project" value="UniProtKB-KW"/>
</dbReference>
<dbReference type="GO" id="GO:0019838">
    <property type="term" value="F:growth factor binding"/>
    <property type="evidence" value="ECO:0000353"/>
    <property type="project" value="UniProtKB"/>
</dbReference>
<dbReference type="GO" id="GO:0036332">
    <property type="term" value="F:placental growth factor receptor activity"/>
    <property type="evidence" value="ECO:0000314"/>
    <property type="project" value="UniProtKB"/>
</dbReference>
<dbReference type="GO" id="GO:0004714">
    <property type="term" value="F:transmembrane receptor protein tyrosine kinase activity"/>
    <property type="evidence" value="ECO:0000304"/>
    <property type="project" value="ProtInc"/>
</dbReference>
<dbReference type="GO" id="GO:0005021">
    <property type="term" value="F:vascular endothelial growth factor receptor activity"/>
    <property type="evidence" value="ECO:0000314"/>
    <property type="project" value="UniProtKB"/>
</dbReference>
<dbReference type="GO" id="GO:0048514">
    <property type="term" value="P:blood vessel morphogenesis"/>
    <property type="evidence" value="ECO:0000250"/>
    <property type="project" value="UniProtKB"/>
</dbReference>
<dbReference type="GO" id="GO:0030154">
    <property type="term" value="P:cell differentiation"/>
    <property type="evidence" value="ECO:0007669"/>
    <property type="project" value="UniProtKB-KW"/>
</dbReference>
<dbReference type="GO" id="GO:0016477">
    <property type="term" value="P:cell migration"/>
    <property type="evidence" value="ECO:0000315"/>
    <property type="project" value="UniProtKB"/>
</dbReference>
<dbReference type="GO" id="GO:0007169">
    <property type="term" value="P:cell surface receptor protein tyrosine kinase signaling pathway"/>
    <property type="evidence" value="ECO:0000304"/>
    <property type="project" value="ProtInc"/>
</dbReference>
<dbReference type="GO" id="GO:0035924">
    <property type="term" value="P:cellular response to vascular endothelial growth factor stimulus"/>
    <property type="evidence" value="ECO:0000314"/>
    <property type="project" value="UniProtKB"/>
</dbReference>
<dbReference type="GO" id="GO:0048598">
    <property type="term" value="P:embryonic morphogenesis"/>
    <property type="evidence" value="ECO:0000250"/>
    <property type="project" value="UniProtKB"/>
</dbReference>
<dbReference type="GO" id="GO:1990384">
    <property type="term" value="P:hyaloid vascular plexus regression"/>
    <property type="evidence" value="ECO:0000250"/>
    <property type="project" value="UniProtKB"/>
</dbReference>
<dbReference type="GO" id="GO:0002548">
    <property type="term" value="P:monocyte chemotaxis"/>
    <property type="evidence" value="ECO:0000314"/>
    <property type="project" value="UniProtKB"/>
</dbReference>
<dbReference type="GO" id="GO:1905563">
    <property type="term" value="P:negative regulation of vascular endothelial cell proliferation"/>
    <property type="evidence" value="ECO:0000316"/>
    <property type="project" value="BHF-UCL"/>
</dbReference>
<dbReference type="GO" id="GO:0018108">
    <property type="term" value="P:peptidyl-tyrosine phosphorylation"/>
    <property type="evidence" value="ECO:0000314"/>
    <property type="project" value="UniProtKB"/>
</dbReference>
<dbReference type="GO" id="GO:0045766">
    <property type="term" value="P:positive regulation of angiogenesis"/>
    <property type="evidence" value="ECO:0000315"/>
    <property type="project" value="UniProtKB"/>
</dbReference>
<dbReference type="GO" id="GO:0030335">
    <property type="term" value="P:positive regulation of cell migration"/>
    <property type="evidence" value="ECO:0000314"/>
    <property type="project" value="UniProtKB"/>
</dbReference>
<dbReference type="GO" id="GO:0008284">
    <property type="term" value="P:positive regulation of cell population proliferation"/>
    <property type="evidence" value="ECO:0000318"/>
    <property type="project" value="GO_Central"/>
</dbReference>
<dbReference type="GO" id="GO:0043406">
    <property type="term" value="P:positive regulation of MAP kinase activity"/>
    <property type="evidence" value="ECO:0000314"/>
    <property type="project" value="UniProtKB"/>
</dbReference>
<dbReference type="GO" id="GO:0043410">
    <property type="term" value="P:positive regulation of MAPK cascade"/>
    <property type="evidence" value="ECO:0000314"/>
    <property type="project" value="UniProtKB"/>
</dbReference>
<dbReference type="GO" id="GO:0051897">
    <property type="term" value="P:positive regulation of phosphatidylinositol 3-kinase/protein kinase B signal transduction"/>
    <property type="evidence" value="ECO:0000315"/>
    <property type="project" value="UniProtKB"/>
</dbReference>
<dbReference type="GO" id="GO:0046777">
    <property type="term" value="P:protein autophosphorylation"/>
    <property type="evidence" value="ECO:0000314"/>
    <property type="project" value="UniProtKB"/>
</dbReference>
<dbReference type="GO" id="GO:0002040">
    <property type="term" value="P:sprouting angiogenesis"/>
    <property type="evidence" value="ECO:0000318"/>
    <property type="project" value="GO_Central"/>
</dbReference>
<dbReference type="GO" id="GO:0048010">
    <property type="term" value="P:vascular endothelial growth factor receptor signaling pathway"/>
    <property type="evidence" value="ECO:0000314"/>
    <property type="project" value="UniProtKB"/>
</dbReference>
<dbReference type="GO" id="GO:0036323">
    <property type="term" value="P:vascular endothelial growth factor receptor-1 signaling pathway"/>
    <property type="evidence" value="ECO:0000314"/>
    <property type="project" value="UniProtKB"/>
</dbReference>
<dbReference type="CDD" id="cd00096">
    <property type="entry name" value="Ig"/>
    <property type="match status" value="2"/>
</dbReference>
<dbReference type="CDD" id="cd05862">
    <property type="entry name" value="IgI_VEGFR"/>
    <property type="match status" value="1"/>
</dbReference>
<dbReference type="CDD" id="cd07702">
    <property type="entry name" value="IgI_VEGFR-1"/>
    <property type="match status" value="1"/>
</dbReference>
<dbReference type="CDD" id="cd14207">
    <property type="entry name" value="PTKc_VEGFR1"/>
    <property type="match status" value="1"/>
</dbReference>
<dbReference type="FunFam" id="2.60.40.10:FF:000606">
    <property type="entry name" value="Vascular endothelial growth factor receptor 1"/>
    <property type="match status" value="1"/>
</dbReference>
<dbReference type="FunFam" id="2.60.40.10:FF:001031">
    <property type="entry name" value="Vascular endothelial growth factor receptor 1"/>
    <property type="match status" value="1"/>
</dbReference>
<dbReference type="FunFam" id="2.60.40.10:FF:001347">
    <property type="entry name" value="Vascular endothelial growth factor receptor 1"/>
    <property type="match status" value="1"/>
</dbReference>
<dbReference type="FunFam" id="2.60.40.10:FF:000934">
    <property type="entry name" value="vascular endothelial growth factor receptor 1"/>
    <property type="match status" value="1"/>
</dbReference>
<dbReference type="FunFam" id="2.60.40.10:FF:001014">
    <property type="entry name" value="vascular endothelial growth factor receptor 1"/>
    <property type="match status" value="1"/>
</dbReference>
<dbReference type="FunFam" id="2.60.40.10:FF:001245">
    <property type="entry name" value="vascular endothelial growth factor receptor 1"/>
    <property type="match status" value="1"/>
</dbReference>
<dbReference type="FunFam" id="1.10.510.10:FF:000077">
    <property type="entry name" value="Vascular endothelial growth factor receptor 2"/>
    <property type="match status" value="1"/>
</dbReference>
<dbReference type="FunFam" id="3.30.200.20:FF:000041">
    <property type="entry name" value="Vascular endothelial growth factor receptor 2"/>
    <property type="match status" value="1"/>
</dbReference>
<dbReference type="FunFam" id="2.60.40.10:FF:000143">
    <property type="entry name" value="Vascular endothelial growth factor receptor 3"/>
    <property type="match status" value="1"/>
</dbReference>
<dbReference type="Gene3D" id="2.60.40.10">
    <property type="entry name" value="Immunoglobulins"/>
    <property type="match status" value="7"/>
</dbReference>
<dbReference type="Gene3D" id="3.30.200.20">
    <property type="entry name" value="Phosphorylase Kinase, domain 1"/>
    <property type="match status" value="1"/>
</dbReference>
<dbReference type="Gene3D" id="1.10.510.10">
    <property type="entry name" value="Transferase(Phosphotransferase) domain 1"/>
    <property type="match status" value="1"/>
</dbReference>
<dbReference type="InterPro" id="IPR007110">
    <property type="entry name" value="Ig-like_dom"/>
</dbReference>
<dbReference type="InterPro" id="IPR036179">
    <property type="entry name" value="Ig-like_dom_sf"/>
</dbReference>
<dbReference type="InterPro" id="IPR013783">
    <property type="entry name" value="Ig-like_fold"/>
</dbReference>
<dbReference type="InterPro" id="IPR013098">
    <property type="entry name" value="Ig_I-set"/>
</dbReference>
<dbReference type="InterPro" id="IPR003599">
    <property type="entry name" value="Ig_sub"/>
</dbReference>
<dbReference type="InterPro" id="IPR003598">
    <property type="entry name" value="Ig_sub2"/>
</dbReference>
<dbReference type="InterPro" id="IPR013106">
    <property type="entry name" value="Ig_V-set"/>
</dbReference>
<dbReference type="InterPro" id="IPR013151">
    <property type="entry name" value="Immunoglobulin_dom"/>
</dbReference>
<dbReference type="InterPro" id="IPR011009">
    <property type="entry name" value="Kinase-like_dom_sf"/>
</dbReference>
<dbReference type="InterPro" id="IPR000719">
    <property type="entry name" value="Prot_kinase_dom"/>
</dbReference>
<dbReference type="InterPro" id="IPR017441">
    <property type="entry name" value="Protein_kinase_ATP_BS"/>
</dbReference>
<dbReference type="InterPro" id="IPR050122">
    <property type="entry name" value="RTK"/>
</dbReference>
<dbReference type="InterPro" id="IPR001245">
    <property type="entry name" value="Ser-Thr/Tyr_kinase_cat_dom"/>
</dbReference>
<dbReference type="InterPro" id="IPR008266">
    <property type="entry name" value="Tyr_kinase_AS"/>
</dbReference>
<dbReference type="InterPro" id="IPR020635">
    <property type="entry name" value="Tyr_kinase_cat_dom"/>
</dbReference>
<dbReference type="InterPro" id="IPR001824">
    <property type="entry name" value="Tyr_kinase_rcpt_3_CS"/>
</dbReference>
<dbReference type="InterPro" id="IPR041348">
    <property type="entry name" value="VEGFR-2_TMD"/>
</dbReference>
<dbReference type="InterPro" id="IPR055229">
    <property type="entry name" value="VEGFR1-3_5th"/>
</dbReference>
<dbReference type="InterPro" id="IPR055238">
    <property type="entry name" value="VEGFR1-3_N_Ig-like"/>
</dbReference>
<dbReference type="InterPro" id="IPR009135">
    <property type="entry name" value="VEGFR1_rcpt"/>
</dbReference>
<dbReference type="PANTHER" id="PTHR24416">
    <property type="entry name" value="TYROSINE-PROTEIN KINASE RECEPTOR"/>
    <property type="match status" value="1"/>
</dbReference>
<dbReference type="PANTHER" id="PTHR24416:SF390">
    <property type="entry name" value="VASCULAR ENDOTHELIAL GROWTH FACTOR RECEPTOR 1"/>
    <property type="match status" value="1"/>
</dbReference>
<dbReference type="Pfam" id="PF07679">
    <property type="entry name" value="I-set"/>
    <property type="match status" value="2"/>
</dbReference>
<dbReference type="Pfam" id="PF00047">
    <property type="entry name" value="ig"/>
    <property type="match status" value="1"/>
</dbReference>
<dbReference type="Pfam" id="PF13927">
    <property type="entry name" value="Ig_3"/>
    <property type="match status" value="1"/>
</dbReference>
<dbReference type="Pfam" id="PF22971">
    <property type="entry name" value="Ig_VEGFR-1-like_5th"/>
    <property type="match status" value="1"/>
</dbReference>
<dbReference type="Pfam" id="PF07714">
    <property type="entry name" value="PK_Tyr_Ser-Thr"/>
    <property type="match status" value="1"/>
</dbReference>
<dbReference type="Pfam" id="PF21339">
    <property type="entry name" value="VEGFR-1-like_Ig-like"/>
    <property type="match status" value="1"/>
</dbReference>
<dbReference type="Pfam" id="PF17988">
    <property type="entry name" value="VEGFR-2_TMD"/>
    <property type="match status" value="1"/>
</dbReference>
<dbReference type="Pfam" id="PF22854">
    <property type="entry name" value="VEGFR1-3_N_Ig-like"/>
    <property type="match status" value="1"/>
</dbReference>
<dbReference type="PIRSF" id="PIRSF000615">
    <property type="entry name" value="TyrPK_CSF1-R"/>
    <property type="match status" value="1"/>
</dbReference>
<dbReference type="PRINTS" id="PR01832">
    <property type="entry name" value="VEGFRECEPTOR"/>
</dbReference>
<dbReference type="PRINTS" id="PR01833">
    <property type="entry name" value="VEGFRECEPTR1"/>
</dbReference>
<dbReference type="SMART" id="SM00409">
    <property type="entry name" value="IG"/>
    <property type="match status" value="7"/>
</dbReference>
<dbReference type="SMART" id="SM00408">
    <property type="entry name" value="IGc2"/>
    <property type="match status" value="5"/>
</dbReference>
<dbReference type="SMART" id="SM00406">
    <property type="entry name" value="IGv"/>
    <property type="match status" value="2"/>
</dbReference>
<dbReference type="SMART" id="SM00219">
    <property type="entry name" value="TyrKc"/>
    <property type="match status" value="1"/>
</dbReference>
<dbReference type="SUPFAM" id="SSF48726">
    <property type="entry name" value="Immunoglobulin"/>
    <property type="match status" value="7"/>
</dbReference>
<dbReference type="SUPFAM" id="SSF56112">
    <property type="entry name" value="Protein kinase-like (PK-like)"/>
    <property type="match status" value="1"/>
</dbReference>
<dbReference type="PROSITE" id="PS50835">
    <property type="entry name" value="IG_LIKE"/>
    <property type="match status" value="6"/>
</dbReference>
<dbReference type="PROSITE" id="PS00107">
    <property type="entry name" value="PROTEIN_KINASE_ATP"/>
    <property type="match status" value="1"/>
</dbReference>
<dbReference type="PROSITE" id="PS50011">
    <property type="entry name" value="PROTEIN_KINASE_DOM"/>
    <property type="match status" value="1"/>
</dbReference>
<dbReference type="PROSITE" id="PS00109">
    <property type="entry name" value="PROTEIN_KINASE_TYR"/>
    <property type="match status" value="1"/>
</dbReference>
<dbReference type="PROSITE" id="PS00240">
    <property type="entry name" value="RECEPTOR_TYR_KIN_III"/>
    <property type="match status" value="1"/>
</dbReference>
<comment type="function">
    <text evidence="2 10 11 13 14 15 18 20 22 23 24 25 27 28 30 32 33 34 35 39">Tyrosine-protein kinase that acts as a cell-surface receptor for VEGFA, VEGFB and PGF, and plays an essential role in the development of embryonic vasculature, the regulation of angiogenesis, cell survival, cell migration, macrophage function, chemotaxis, and cancer cell invasion. Acts as a positive regulator of postnatal retinal hyaloid vessel regression (By similarity). May play an essential role as a negative regulator of embryonic angiogenesis by inhibiting excessive proliferation of endothelial cells. Can promote endothelial cell proliferation, survival and angiogenesis in adulthood. Its function in promoting cell proliferation seems to be cell-type specific. Promotes PGF-mediated proliferation of endothelial cells, proliferation of some types of cancer cells, but does not promote proliferation of normal fibroblasts (in vitro). Has very high affinity for VEGFA and relatively low protein kinase activity; may function as a negative regulator of VEGFA signaling by limiting the amount of free VEGFA and preventing its binding to KDR. Modulates KDR signaling by forming heterodimers with KDR. Ligand binding leads to the activation of several signaling cascades. Activation of PLCG leads to the production of the cellular signaling molecules diacylglycerol and inositol 1,4,5-trisphosphate and the activation of protein kinase C. Mediates phosphorylation of PIK3R1, the regulatory subunit of phosphatidylinositol 3-kinase, leading to activation of phosphatidylinositol kinase and the downstream signaling pathway. Mediates activation of MAPK1/ERK2, MAPK3/ERK1 and the MAP kinase signaling pathway, as well as of the AKT1 signaling pathway. Phosphorylates SRC and YES1, and may also phosphorylate CBL. Promotes phosphorylation of AKT1 at 'Ser-473'. Promotes phosphorylation of PTK2/FAK1 (PubMed:16685275).</text>
</comment>
<comment type="function">
    <molecule>Isoform 1</molecule>
    <text evidence="35">Phosphorylates PLCG.</text>
</comment>
<comment type="function">
    <molecule>Isoform 2</molecule>
    <text evidence="30">May function as decoy receptor for VEGFA.</text>
</comment>
<comment type="function">
    <molecule>Isoform 3</molecule>
    <text evidence="30">May function as decoy receptor for VEGFA.</text>
</comment>
<comment type="function">
    <molecule>Isoform 4</molecule>
    <text evidence="30">May function as decoy receptor for VEGFA.</text>
</comment>
<comment type="function">
    <molecule>Isoform 7</molecule>
    <text evidence="27">Has a truncated kinase domain; it increases phosphorylation of SRC at 'Tyr-418' by unknown means and promotes tumor cell invasion.</text>
</comment>
<comment type="catalytic activity">
    <reaction evidence="6 11 14 32 35 38">
        <text>L-tyrosyl-[protein] + ATP = O-phospho-L-tyrosyl-[protein] + ADP + H(+)</text>
        <dbReference type="Rhea" id="RHEA:10596"/>
        <dbReference type="Rhea" id="RHEA-COMP:10136"/>
        <dbReference type="Rhea" id="RHEA-COMP:20101"/>
        <dbReference type="ChEBI" id="CHEBI:15378"/>
        <dbReference type="ChEBI" id="CHEBI:30616"/>
        <dbReference type="ChEBI" id="CHEBI:46858"/>
        <dbReference type="ChEBI" id="CHEBI:61978"/>
        <dbReference type="ChEBI" id="CHEBI:456216"/>
        <dbReference type="EC" id="2.7.10.1"/>
    </reaction>
</comment>
<comment type="activity regulation">
    <text>Present in an inactive conformation in the absence of bound ligand. Binding of VEGFA, VEGFB or PGF leads to dimerization and activation by autophosphorylation on tyrosine residues.</text>
</comment>
<comment type="subunit">
    <text evidence="8 9 11 12 14 16 17 26 29 31 32 33 35 36 37 38">Interacts with VEGFA, VEGFB and PGF. Monomer in the absence of bound VEGFA, VEGFB or PGF. Homodimer in the presence of bound VEGFA, VEGFB and PGF. Can also form a heterodimer with KDR. Interacts (when tyrosine phosphorylated) with CBL, CRK, GRB2, NCK1, PIK3R1, PLCG, PSEN1 and PTPN11. Probably also interacts with PTPRB. Interacts with RACK1. Identified in a complex with CBL and CD2AP.</text>
</comment>
<comment type="interaction">
    <interactant intactId="EBI-1026718">
        <id>P17948</id>
    </interactant>
    <interactant intactId="EBI-518228">
        <id>P22681</id>
        <label>CBL</label>
    </interactant>
    <organismsDiffer>false</organismsDiffer>
    <experiments>2</experiments>
</comment>
<comment type="interaction">
    <interactant intactId="EBI-1026718">
        <id>P17948</id>
    </interactant>
    <interactant intactId="EBI-910">
        <id>P46109</id>
        <label>CRKL</label>
    </interactant>
    <organismsDiffer>false</organismsDiffer>
    <experiments>9</experiments>
</comment>
<comment type="interaction">
    <interactant intactId="EBI-1026718">
        <id>P17948</id>
    </interactant>
    <interactant intactId="EBI-1037633">
        <id>P49763</id>
        <label>PGF</label>
    </interactant>
    <organismsDiffer>false</organismsDiffer>
    <experiments>2</experiments>
</comment>
<comment type="interaction">
    <interactant intactId="EBI-1026718">
        <id>P17948</id>
    </interactant>
    <interactant intactId="EBI-79464">
        <id>P27986</id>
        <label>PIK3R1</label>
    </interactant>
    <organismsDiffer>false</organismsDiffer>
    <experiments>3</experiments>
</comment>
<comment type="interaction">
    <interactant intactId="EBI-1026718">
        <id>P17948</id>
    </interactant>
    <interactant intactId="EBI-2264500">
        <id>Q12913</id>
        <label>PTPRJ</label>
    </interactant>
    <organismsDiffer>false</organismsDiffer>
    <experiments>2</experiments>
</comment>
<comment type="interaction">
    <interactant intactId="EBI-1026718">
        <id>P17948</id>
    </interactant>
    <interactant intactId="EBI-1026643">
        <id>P15692</id>
        <label>VEGFA</label>
    </interactant>
    <organismsDiffer>false</organismsDiffer>
    <experiments>5</experiments>
</comment>
<comment type="interaction">
    <interactant intactId="EBI-1026718">
        <id>P17948</id>
    </interactant>
    <interactant intactId="EBI-1026691">
        <id>P15692-4</id>
        <label>VEGFA</label>
    </interactant>
    <organismsDiffer>false</organismsDiffer>
    <experiments>3</experiments>
</comment>
<comment type="interaction">
    <interactant intactId="EBI-6530464">
        <id>P17948-2</id>
    </interactant>
    <interactant intactId="EBI-6896259">
        <id>PRO_0000391621</id>
        <label>HSPG2</label>
        <dbReference type="UniProtKB" id="P98160"/>
    </interactant>
    <organismsDiffer>false</organismsDiffer>
    <experiments>2</experiments>
</comment>
<comment type="interaction">
    <interactant intactId="EBI-6530464">
        <id>P17948-2</id>
    </interactant>
    <interactant intactId="EBI-6896607">
        <id>PRO_0000391622</id>
        <label>HSPG2</label>
        <dbReference type="UniProtKB" id="P98160"/>
    </interactant>
    <organismsDiffer>false</organismsDiffer>
    <experiments>2</experiments>
</comment>
<comment type="subcellular location">
    <molecule>Isoform 1</molecule>
    <subcellularLocation>
        <location>Cell membrane</location>
        <topology>Single-pass type I membrane protein</topology>
    </subcellularLocation>
    <subcellularLocation>
        <location>Endosome</location>
    </subcellularLocation>
    <text>Autophosphorylation promotes ubiquitination and endocytosis.</text>
</comment>
<comment type="subcellular location">
    <molecule>Isoform 2</molecule>
    <subcellularLocation>
        <location evidence="33">Secreted</location>
    </subcellularLocation>
</comment>
<comment type="subcellular location">
    <molecule>Isoform 3</molecule>
    <subcellularLocation>
        <location>Secreted</location>
    </subcellularLocation>
</comment>
<comment type="subcellular location">
    <molecule>Isoform 4</molecule>
    <subcellularLocation>
        <location>Secreted</location>
    </subcellularLocation>
</comment>
<comment type="subcellular location">
    <molecule>Isoform 5</molecule>
    <subcellularLocation>
        <location evidence="47">Cytoplasm</location>
    </subcellularLocation>
</comment>
<comment type="subcellular location">
    <molecule>Isoform 6</molecule>
    <subcellularLocation>
        <location evidence="47">Cytoplasm</location>
    </subcellularLocation>
</comment>
<comment type="subcellular location">
    <molecule>Isoform 7</molecule>
    <subcellularLocation>
        <location evidence="47">Cytoplasm</location>
    </subcellularLocation>
</comment>
<comment type="alternative products">
    <event type="alternative splicing"/>
    <isoform>
        <id>P17948-1</id>
        <name>1</name>
        <name>Flt1</name>
        <sequence type="displayed"/>
    </isoform>
    <isoform>
        <id>P17948-2</id>
        <name>2</name>
        <name>sFlt1</name>
        <sequence type="described" ref="VSP_002955 VSP_002956"/>
    </isoform>
    <isoform>
        <id>P17948-3</id>
        <name>3</name>
        <name>sFlt1-14</name>
        <sequence type="described" ref="VSP_041927 VSP_041928"/>
    </isoform>
    <isoform>
        <id>P17948-4</id>
        <name>4</name>
        <sequence type="described" ref="VSP_041929 VSP_041930"/>
    </isoform>
    <isoform>
        <id>P17948-5</id>
        <name>5</name>
        <name>i15</name>
        <sequence type="described" ref="VSP_041985"/>
    </isoform>
    <isoform>
        <id>P17948-6</id>
        <name>6</name>
        <name>i18</name>
        <sequence type="described" ref="VSP_041984"/>
    </isoform>
    <isoform>
        <id>P17948-7</id>
        <name>7</name>
        <name>i21</name>
        <sequence type="described" ref="VSP_041983"/>
    </isoform>
    <isoform>
        <id>P17948-8</id>
        <name>8</name>
        <sequence type="described" ref="VSP_047759 VSP_047760"/>
    </isoform>
    <text>Additional isoforms seem to exist.</text>
</comment>
<comment type="tissue specificity">
    <text evidence="23 27">Detected in normal lung, but also in placenta, liver, kidney, heart and brain tissues. Specifically expressed in most of the vascular endothelial cells, and also expressed in peripheral blood monocytes. Isoform 2 is strongly expressed in placenta. Isoform 3 is expressed in corneal epithelial cells (at protein level). Isoform 3 is expressed in vascular smooth muscle cells (VSMC).</text>
</comment>
<comment type="induction">
    <text evidence="23 34">Up-regulated in coculture of VSMC/endothelial cell (EC) or by direct exposure to VEGF of VSMC monoculture. Up-regulated from the second trimester of pregnancy to the term and in the placenta of women with preeclampsia (PE). Up-regulated in monocytes exposed to bacterial lipopolysaccharide (LPS).</text>
</comment>
<comment type="domain">
    <text evidence="26 36">The second and third Ig-like C2-type (immunoglobulin-like) domains are sufficient for VEGFA binding.</text>
</comment>
<comment type="PTM">
    <text evidence="8 12">N-glycosylated.</text>
</comment>
<comment type="PTM">
    <text evidence="17">Ubiquitinated after VEGFA-mediated autophosphorylation, leading to proteolytic degradation.</text>
</comment>
<comment type="PTM">
    <text evidence="12 14 35 37 38">Autophosphorylated on tyrosine residues upon ligand binding. Autophosphorylation occurs in trans, i.e. one subunit of the dimeric receptor phosphorylates tyrosine residues on the other subunit. Phosphorylation at Tyr-1169 is important for interaction with PLCG. Phosphorylation at Tyr-1213 is important for interaction with PIK3R1, PTPN11, GRB2, and PLCG. Phosphorylation at Tyr-1333 is important for endocytosis and for interaction with CBL, NCK1 and CRK. Is probably dephosphorylated by PTPRB.</text>
</comment>
<comment type="disease">
    <text>Can contribute to cancer cell survival, proliferation, migration, and invasion, and tumor angiogenesis and metastasis. May contribute to cancer pathogenesis by promoting inflammatory responses and recruitment of tumor-infiltrating macrophages.</text>
</comment>
<comment type="disease">
    <text>Abnormally high expression of soluble isoforms (isoform 2, isoform 3 or isoform 4) may be a cause of preeclampsia.</text>
</comment>
<comment type="similarity">
    <text evidence="5">Belongs to the protein kinase superfamily. Tyr protein kinase family. CSF-1/PDGF receptor subfamily.</text>
</comment>
<protein>
    <recommendedName>
        <fullName>Vascular endothelial growth factor receptor 1</fullName>
        <shortName>VEGFR-1</shortName>
        <ecNumber>2.7.10.1</ecNumber>
    </recommendedName>
    <alternativeName>
        <fullName>Fms-like tyrosine kinase 1</fullName>
        <shortName>FLT-1</shortName>
    </alternativeName>
    <alternativeName>
        <fullName>Tyrosine-protein kinase FRT</fullName>
    </alternativeName>
    <alternativeName>
        <fullName>Tyrosine-protein kinase receptor FLT</fullName>
        <shortName>FLT</shortName>
    </alternativeName>
    <alternativeName>
        <fullName>Vascular permeability factor receptor</fullName>
    </alternativeName>
</protein>
<name>VGFR1_HUMAN</name>
<gene>
    <name type="primary">FLT1</name>
    <name type="synonym">FLT</name>
    <name type="synonym">FRT</name>
    <name type="synonym">VEGFR1</name>
</gene>
<reference key="1">
    <citation type="journal article" date="1990" name="Oncogene">
        <title>Nucleotide sequence and expression of a novel human receptor-type tyrosine kinase gene (flt) closely related to the fms family.</title>
        <authorList>
            <person name="Shibuya M."/>
            <person name="Yamaguchi S."/>
            <person name="Yamane A."/>
            <person name="Ikeda T."/>
            <person name="Tojo A."/>
            <person name="Matsushime H."/>
            <person name="Sato M."/>
        </authorList>
    </citation>
    <scope>NUCLEOTIDE SEQUENCE [MRNA] (ISOFORM 1)</scope>
    <source>
        <tissue>Placenta</tissue>
    </source>
</reference>
<reference key="2">
    <citation type="journal article" date="1993" name="Proc. Natl. Acad. Sci. U.S.A.">
        <title>Inhibition of vascular endothelial cell growth factor activity by an endogenously encoded soluble receptor.</title>
        <authorList>
            <person name="Kendall R.L."/>
            <person name="Thomas K.A."/>
        </authorList>
    </citation>
    <scope>NUCLEOTIDE SEQUENCE [MRNA] (ISOFORM 2)</scope>
    <scope>PROTEIN SEQUENCE OF N-TERMINUS</scope>
    <scope>SUBCELLULAR LOCATION (ISOFORM 2)</scope>
    <scope>INTERACTION WITH VEGFA</scope>
    <scope>FUNCTION</scope>
    <source>
        <tissue>Umbilical vein</tissue>
    </source>
</reference>
<reference key="3">
    <citation type="journal article" date="1999" name="Biochem. Biophys. Res. Commun.">
        <title>Characterization of the VEGF binding site on the Flt-1 receptor.</title>
        <authorList>
            <person name="Herley M.T."/>
            <person name="Yu Y."/>
            <person name="Whitney R.G."/>
            <person name="Sato J.D."/>
        </authorList>
    </citation>
    <scope>NUCLEOTIDE SEQUENCE [MRNA] (ISOFORM 1)</scope>
    <scope>INTERACTION WITH VEGFA</scope>
    <scope>GLYCOSYLATION</scope>
    <source>
        <tissue>Umbilical vein</tissue>
    </source>
</reference>
<reference key="4">
    <citation type="journal article" date="2008" name="Arthritis Res. Ther.">
        <title>Novel splice variants derived from the receptor tyrosine kinase superfamily are potential therapeutics for rheumatoid arthritis.</title>
        <authorList>
            <person name="Jin P."/>
            <person name="Zhang J."/>
            <person name="Sumariwalla P.F."/>
            <person name="Ni I."/>
            <person name="Jorgensen B."/>
            <person name="Crawford D."/>
            <person name="Phillips S."/>
            <person name="Feldmann M."/>
            <person name="Shepard H.M."/>
            <person name="Paleolog E.M."/>
        </authorList>
    </citation>
    <scope>NUCLEOTIDE SEQUENCE [MRNA] (ISOFORM 4)</scope>
    <scope>FUNCTION IN LIGAND BINDING</scope>
    <scope>SUBCELLULAR LOCATION</scope>
</reference>
<reference key="5">
    <citation type="journal article" date="2008" name="Circ. Res.">
        <title>A novel human-specific soluble vascular endothelial growth factor receptor 1: cell-type-specific splicing and implications to vascular endothelial growth factor homeostasis and preeclampsia.</title>
        <authorList>
            <person name="Sela S."/>
            <person name="Itin A."/>
            <person name="Natanson-Yaron S."/>
            <person name="Greenfield C."/>
            <person name="Goldman-Wohl D."/>
            <person name="Yagel S."/>
            <person name="Keshet E."/>
        </authorList>
    </citation>
    <scope>NUCLEOTIDE SEQUENCE [MRNA] (ISOFORM 3)</scope>
    <scope>FUNCTION</scope>
    <scope>SUBCELLULAR LOCATION</scope>
    <scope>TISSUE SPECIFICITY</scope>
    <scope>ROLE IN PREECLAMPSIA</scope>
    <scope>INDUCTION</scope>
</reference>
<reference key="6">
    <citation type="journal article" date="2010" name="J. Cell. Biochem.">
        <title>A novel intracellular isoform of VEGFR-1 activates Src and promotes cell invasion in MDA-MB-231 breast cancer cells.</title>
        <authorList>
            <person name="Mezquita B."/>
            <person name="Mezquita J."/>
            <person name="Pau M."/>
            <person name="Mezquita C."/>
        </authorList>
    </citation>
    <scope>NUCLEOTIDE SEQUENCE [MRNA] (ISOFORMS 5; 6; 7 AND 8)</scope>
    <scope>ALTERNATIVE SPLICING</scope>
    <scope>FUNCTION IN PHOSPHORYLATION OF SRC AND CANCER CELL INVASIVENESS</scope>
    <scope>TISSUE SPECIFICITY</scope>
</reference>
<reference key="7">
    <citation type="submission" date="2007-12" db="EMBL/GenBank/DDBJ databases">
        <title>A new VEGFR1 receptor transcript coding for the extracellular domains of the protein followed by a C-terminal polyserine tail.</title>
        <authorList>
            <person name="Mezquita J."/>
            <person name="Mezquita B."/>
            <person name="Pau M."/>
            <person name="Mezquita C."/>
        </authorList>
    </citation>
    <scope>NUCLEOTIDE SEQUENCE [MRNA] (ISOFORM 3)</scope>
</reference>
<reference key="8">
    <citation type="submission" date="2007-12" db="EMBL/GenBank/DDBJ databases">
        <authorList>
            <consortium name="NHLBI resequencing and genotyping service (RS&amp;G)"/>
        </authorList>
    </citation>
    <scope>NUCLEOTIDE SEQUENCE [GENOMIC DNA]</scope>
</reference>
<reference key="9">
    <citation type="journal article" date="2004" name="Nat. Genet.">
        <title>Complete sequencing and characterization of 21,243 full-length human cDNAs.</title>
        <authorList>
            <person name="Ota T."/>
            <person name="Suzuki Y."/>
            <person name="Nishikawa T."/>
            <person name="Otsuki T."/>
            <person name="Sugiyama T."/>
            <person name="Irie R."/>
            <person name="Wakamatsu A."/>
            <person name="Hayashi K."/>
            <person name="Sato H."/>
            <person name="Nagai K."/>
            <person name="Kimura K."/>
            <person name="Makita H."/>
            <person name="Sekine M."/>
            <person name="Obayashi M."/>
            <person name="Nishi T."/>
            <person name="Shibahara T."/>
            <person name="Tanaka T."/>
            <person name="Ishii S."/>
            <person name="Yamamoto J."/>
            <person name="Saito K."/>
            <person name="Kawai Y."/>
            <person name="Isono Y."/>
            <person name="Nakamura Y."/>
            <person name="Nagahari K."/>
            <person name="Murakami K."/>
            <person name="Yasuda T."/>
            <person name="Iwayanagi T."/>
            <person name="Wagatsuma M."/>
            <person name="Shiratori A."/>
            <person name="Sudo H."/>
            <person name="Hosoiri T."/>
            <person name="Kaku Y."/>
            <person name="Kodaira H."/>
            <person name="Kondo H."/>
            <person name="Sugawara M."/>
            <person name="Takahashi M."/>
            <person name="Kanda K."/>
            <person name="Yokoi T."/>
            <person name="Furuya T."/>
            <person name="Kikkawa E."/>
            <person name="Omura Y."/>
            <person name="Abe K."/>
            <person name="Kamihara K."/>
            <person name="Katsuta N."/>
            <person name="Sato K."/>
            <person name="Tanikawa M."/>
            <person name="Yamazaki M."/>
            <person name="Ninomiya K."/>
            <person name="Ishibashi T."/>
            <person name="Yamashita H."/>
            <person name="Murakawa K."/>
            <person name="Fujimori K."/>
            <person name="Tanai H."/>
            <person name="Kimata M."/>
            <person name="Watanabe M."/>
            <person name="Hiraoka S."/>
            <person name="Chiba Y."/>
            <person name="Ishida S."/>
            <person name="Ono Y."/>
            <person name="Takiguchi S."/>
            <person name="Watanabe S."/>
            <person name="Yosida M."/>
            <person name="Hotuta T."/>
            <person name="Kusano J."/>
            <person name="Kanehori K."/>
            <person name="Takahashi-Fujii A."/>
            <person name="Hara H."/>
            <person name="Tanase T.-O."/>
            <person name="Nomura Y."/>
            <person name="Togiya S."/>
            <person name="Komai F."/>
            <person name="Hara R."/>
            <person name="Takeuchi K."/>
            <person name="Arita M."/>
            <person name="Imose N."/>
            <person name="Musashino K."/>
            <person name="Yuuki H."/>
            <person name="Oshima A."/>
            <person name="Sasaki N."/>
            <person name="Aotsuka S."/>
            <person name="Yoshikawa Y."/>
            <person name="Matsunawa H."/>
            <person name="Ichihara T."/>
            <person name="Shiohata N."/>
            <person name="Sano S."/>
            <person name="Moriya S."/>
            <person name="Momiyama H."/>
            <person name="Satoh N."/>
            <person name="Takami S."/>
            <person name="Terashima Y."/>
            <person name="Suzuki O."/>
            <person name="Nakagawa S."/>
            <person name="Senoh A."/>
            <person name="Mizoguchi H."/>
            <person name="Goto Y."/>
            <person name="Shimizu F."/>
            <person name="Wakebe H."/>
            <person name="Hishigaki H."/>
            <person name="Watanabe T."/>
            <person name="Sugiyama A."/>
            <person name="Takemoto M."/>
            <person name="Kawakami B."/>
            <person name="Yamazaki M."/>
            <person name="Watanabe K."/>
            <person name="Kumagai A."/>
            <person name="Itakura S."/>
            <person name="Fukuzumi Y."/>
            <person name="Fujimori Y."/>
            <person name="Komiyama M."/>
            <person name="Tashiro H."/>
            <person name="Tanigami A."/>
            <person name="Fujiwara T."/>
            <person name="Ono T."/>
            <person name="Yamada K."/>
            <person name="Fujii Y."/>
            <person name="Ozaki K."/>
            <person name="Hirao M."/>
            <person name="Ohmori Y."/>
            <person name="Kawabata A."/>
            <person name="Hikiji T."/>
            <person name="Kobatake N."/>
            <person name="Inagaki H."/>
            <person name="Ikema Y."/>
            <person name="Okamoto S."/>
            <person name="Okitani R."/>
            <person name="Kawakami T."/>
            <person name="Noguchi S."/>
            <person name="Itoh T."/>
            <person name="Shigeta K."/>
            <person name="Senba T."/>
            <person name="Matsumura K."/>
            <person name="Nakajima Y."/>
            <person name="Mizuno T."/>
            <person name="Morinaga M."/>
            <person name="Sasaki M."/>
            <person name="Togashi T."/>
            <person name="Oyama M."/>
            <person name="Hata H."/>
            <person name="Watanabe M."/>
            <person name="Komatsu T."/>
            <person name="Mizushima-Sugano J."/>
            <person name="Satoh T."/>
            <person name="Shirai Y."/>
            <person name="Takahashi Y."/>
            <person name="Nakagawa K."/>
            <person name="Okumura K."/>
            <person name="Nagase T."/>
            <person name="Nomura N."/>
            <person name="Kikuchi H."/>
            <person name="Masuho Y."/>
            <person name="Yamashita R."/>
            <person name="Nakai K."/>
            <person name="Yada T."/>
            <person name="Nakamura Y."/>
            <person name="Ohara O."/>
            <person name="Isogai T."/>
            <person name="Sugano S."/>
        </authorList>
    </citation>
    <scope>NUCLEOTIDE SEQUENCE [LARGE SCALE MRNA] (ISOFORMS 2 AND 3)</scope>
    <source>
        <tissue>Placenta</tissue>
        <tissue>Trachea</tissue>
    </source>
</reference>
<reference key="10">
    <citation type="journal article" date="2004" name="Nature">
        <title>The DNA sequence and analysis of human chromosome 13.</title>
        <authorList>
            <person name="Dunham A."/>
            <person name="Matthews L.H."/>
            <person name="Burton J."/>
            <person name="Ashurst J.L."/>
            <person name="Howe K.L."/>
            <person name="Ashcroft K.J."/>
            <person name="Beare D.M."/>
            <person name="Burford D.C."/>
            <person name="Hunt S.E."/>
            <person name="Griffiths-Jones S."/>
            <person name="Jones M.C."/>
            <person name="Keenan S.J."/>
            <person name="Oliver K."/>
            <person name="Scott C.E."/>
            <person name="Ainscough R."/>
            <person name="Almeida J.P."/>
            <person name="Ambrose K.D."/>
            <person name="Andrews D.T."/>
            <person name="Ashwell R.I.S."/>
            <person name="Babbage A.K."/>
            <person name="Bagguley C.L."/>
            <person name="Bailey J."/>
            <person name="Bannerjee R."/>
            <person name="Barlow K.F."/>
            <person name="Bates K."/>
            <person name="Beasley H."/>
            <person name="Bird C.P."/>
            <person name="Bray-Allen S."/>
            <person name="Brown A.J."/>
            <person name="Brown J.Y."/>
            <person name="Burrill W."/>
            <person name="Carder C."/>
            <person name="Carter N.P."/>
            <person name="Chapman J.C."/>
            <person name="Clamp M.E."/>
            <person name="Clark S.Y."/>
            <person name="Clarke G."/>
            <person name="Clee C.M."/>
            <person name="Clegg S.C."/>
            <person name="Cobley V."/>
            <person name="Collins J.E."/>
            <person name="Corby N."/>
            <person name="Coville G.J."/>
            <person name="Deloukas P."/>
            <person name="Dhami P."/>
            <person name="Dunham I."/>
            <person name="Dunn M."/>
            <person name="Earthrowl M.E."/>
            <person name="Ellington A.G."/>
            <person name="Faulkner L."/>
            <person name="Frankish A.G."/>
            <person name="Frankland J."/>
            <person name="French L."/>
            <person name="Garner P."/>
            <person name="Garnett J."/>
            <person name="Gilbert J.G.R."/>
            <person name="Gilson C.J."/>
            <person name="Ghori J."/>
            <person name="Grafham D.V."/>
            <person name="Gribble S.M."/>
            <person name="Griffiths C."/>
            <person name="Hall R.E."/>
            <person name="Hammond S."/>
            <person name="Harley J.L."/>
            <person name="Hart E.A."/>
            <person name="Heath P.D."/>
            <person name="Howden P.J."/>
            <person name="Huckle E.J."/>
            <person name="Hunt P.J."/>
            <person name="Hunt A.R."/>
            <person name="Johnson C."/>
            <person name="Johnson D."/>
            <person name="Kay M."/>
            <person name="Kimberley A.M."/>
            <person name="King A."/>
            <person name="Laird G.K."/>
            <person name="Langford C.J."/>
            <person name="Lawlor S."/>
            <person name="Leongamornlert D.A."/>
            <person name="Lloyd D.M."/>
            <person name="Lloyd C."/>
            <person name="Loveland J.E."/>
            <person name="Lovell J."/>
            <person name="Martin S."/>
            <person name="Mashreghi-Mohammadi M."/>
            <person name="McLaren S.J."/>
            <person name="McMurray A."/>
            <person name="Milne S."/>
            <person name="Moore M.J.F."/>
            <person name="Nickerson T."/>
            <person name="Palmer S.A."/>
            <person name="Pearce A.V."/>
            <person name="Peck A.I."/>
            <person name="Pelan S."/>
            <person name="Phillimore B."/>
            <person name="Porter K.M."/>
            <person name="Rice C.M."/>
            <person name="Searle S."/>
            <person name="Sehra H.K."/>
            <person name="Shownkeen R."/>
            <person name="Skuce C.D."/>
            <person name="Smith M."/>
            <person name="Steward C.A."/>
            <person name="Sycamore N."/>
            <person name="Tester J."/>
            <person name="Thomas D.W."/>
            <person name="Tracey A."/>
            <person name="Tromans A."/>
            <person name="Tubby B."/>
            <person name="Wall M."/>
            <person name="Wallis J.M."/>
            <person name="West A.P."/>
            <person name="Whitehead S.L."/>
            <person name="Willey D.L."/>
            <person name="Wilming L."/>
            <person name="Wray P.W."/>
            <person name="Wright M.W."/>
            <person name="Young L."/>
            <person name="Coulson A."/>
            <person name="Durbin R.M."/>
            <person name="Hubbard T."/>
            <person name="Sulston J.E."/>
            <person name="Beck S."/>
            <person name="Bentley D.R."/>
            <person name="Rogers J."/>
            <person name="Ross M.T."/>
        </authorList>
    </citation>
    <scope>NUCLEOTIDE SEQUENCE [LARGE SCALE GENOMIC DNA]</scope>
</reference>
<reference key="11">
    <citation type="submission" date="2005-07" db="EMBL/GenBank/DDBJ databases">
        <authorList>
            <person name="Mural R.J."/>
            <person name="Istrail S."/>
            <person name="Sutton G.G."/>
            <person name="Florea L."/>
            <person name="Halpern A.L."/>
            <person name="Mobarry C.M."/>
            <person name="Lippert R."/>
            <person name="Walenz B."/>
            <person name="Shatkay H."/>
            <person name="Dew I."/>
            <person name="Miller J.R."/>
            <person name="Flanigan M.J."/>
            <person name="Edwards N.J."/>
            <person name="Bolanos R."/>
            <person name="Fasulo D."/>
            <person name="Halldorsson B.V."/>
            <person name="Hannenhalli S."/>
            <person name="Turner R."/>
            <person name="Yooseph S."/>
            <person name="Lu F."/>
            <person name="Nusskern D.R."/>
            <person name="Shue B.C."/>
            <person name="Zheng X.H."/>
            <person name="Zhong F."/>
            <person name="Delcher A.L."/>
            <person name="Huson D.H."/>
            <person name="Kravitz S.A."/>
            <person name="Mouchard L."/>
            <person name="Reinert K."/>
            <person name="Remington K.A."/>
            <person name="Clark A.G."/>
            <person name="Waterman M.S."/>
            <person name="Eichler E.E."/>
            <person name="Adams M.D."/>
            <person name="Hunkapiller M.W."/>
            <person name="Myers E.W."/>
            <person name="Venter J.C."/>
        </authorList>
    </citation>
    <scope>NUCLEOTIDE SEQUENCE [LARGE SCALE GENOMIC DNA]</scope>
</reference>
<reference key="12">
    <citation type="journal article" date="2004" name="Genome Res.">
        <title>The status, quality, and expansion of the NIH full-length cDNA project: the Mammalian Gene Collection (MGC).</title>
        <authorList>
            <consortium name="The MGC Project Team"/>
        </authorList>
    </citation>
    <scope>NUCLEOTIDE SEQUENCE [LARGE SCALE MRNA] (ISOFORM 2)</scope>
    <source>
        <tissue>Ovary</tissue>
    </source>
</reference>
<reference key="13">
    <citation type="journal article" date="1987" name="Jpn. J. Cancer Res.">
        <title>A possible new member of tyrosine kinase family, human frt sequence, is highly conserved in vertebrates and located on human chromosome 13.</title>
        <authorList>
            <person name="Matsushime H."/>
            <person name="Yoshida M.C."/>
            <person name="Sasaki M."/>
            <person name="Shibuya M."/>
        </authorList>
    </citation>
    <scope>NUCLEOTIDE SEQUENCE [GENOMIC DNA] OF 1018-1058</scope>
    <scope>ALTERNATIVE SPLICING (ISOFORM 1)</scope>
</reference>
<reference key="14">
    <citation type="journal article" date="1998" name="J. Biol. Chem.">
        <title>Identification of vascular endothelial growth factor receptor-1 tyrosine phosphorylation sites and binding of SH2 domain-containing molecules.</title>
        <authorList>
            <person name="Ito N."/>
            <person name="Wernstedt C."/>
            <person name="Engstrom U."/>
            <person name="Claesson-Welsh L."/>
        </authorList>
    </citation>
    <scope>PARTIAL PROTEIN SEQUENCE</scope>
    <scope>CATALYTIC ACTIVITY</scope>
    <scope>PHOSPHORYLATION AT TYR-914; TYR-1213; TYR-1242; TYR-1327 AND TYR-1333</scope>
    <scope>MUTAGENESIS OF TYR-914; TYR-1213; TYR-1242; TYR-1327 AND TYR-1333</scope>
    <scope>INTERACTION WITH PLCG; GRB2; CRK; NCK1 AND PTPN11</scope>
</reference>
<reference key="15">
    <citation type="journal article" date="1995" name="Oncogene">
        <title>A unique signal transduction from FLT tyrosine kinase, a receptor for vascular endothelial growth factor VEGF.</title>
        <authorList>
            <person name="Seetharam L."/>
            <person name="Gotoh N."/>
            <person name="Maru Y."/>
            <person name="Neufeld G."/>
            <person name="Yamaguchi S."/>
            <person name="Shibuya M."/>
        </authorList>
    </citation>
    <scope>INTERACTION WITH VEGFA</scope>
    <scope>AUTOPHOSPHORYLATION</scope>
    <scope>CATALYTIC ACTIVITY</scope>
    <scope>FUNCTION IN PHOSPHORYLATION OF PLCG</scope>
    <scope>ABSENCE OF MITOGENIC FUNCTION IN CULTURED FIBROBLASTS</scope>
</reference>
<reference key="16">
    <citation type="journal article" date="1996" name="Blood">
        <title>Migration of human monocytes in response to vascular endothelial growth factor (VEGF) is mediated via the VEGF receptor flt-1.</title>
        <authorList>
            <person name="Barleon B."/>
            <person name="Sozzani S."/>
            <person name="Zhou D."/>
            <person name="Weich H.A."/>
            <person name="Mantovani A."/>
            <person name="Marme D."/>
        </authorList>
    </citation>
    <scope>FUNCTION IN CELL MIGRATION</scope>
    <scope>FUNCTION IN VEGFA AND PGF SIGNALING</scope>
    <scope>INDUCTION</scope>
</reference>
<reference key="17">
    <citation type="journal article" date="1997" name="Biochem. Biophys. Res. Commun.">
        <title>The phosphorylated 1169-tyrosine containing region of flt-1 kinase (VEGFR-1) is a major binding site for PLCgamma.</title>
        <authorList>
            <person name="Sawano A."/>
            <person name="Takahashi T."/>
            <person name="Yamaguchi S."/>
            <person name="Shibuya M."/>
        </authorList>
    </citation>
    <scope>FUNCTION IN PHOSPHORYLATION OF PLCG AND ACTIVATION OF MAP KINASES</scope>
    <scope>INTERACTION WITH PLCG</scope>
    <scope>CATALYTIC ACTIVITY</scope>
    <scope>MUTAGENESIS OF LYS-861 AND TYR-1169</scope>
    <scope>PHOSPHORYLATION AT TYR-1169 AND TYR-1213</scope>
</reference>
<reference key="18">
    <citation type="journal article" date="1998" name="Biochem. Biophys. Res. Commun.">
        <title>Tyrosine 1213 of Flt-1 is a major binding site of Nck and SHP-2.</title>
        <authorList>
            <person name="Igarashi K."/>
            <person name="Isohara T."/>
            <person name="Kato T."/>
            <person name="Shigeta K."/>
            <person name="Yamano T."/>
            <person name="Uno I."/>
        </authorList>
    </citation>
    <scope>INTERACTION WITH PIK3R1; PTPN11 AND NCK1</scope>
    <scope>PHOSPHORYLATION AT TYR-1213</scope>
</reference>
<reference key="19">
    <citation type="journal article" date="2001" name="Am. J. Pathol.">
        <title>Vascular endothelial growth factor receptor-2-mediated mitogenesis is negatively regulated by vascular endothelial growth factor receptor-1 in tumor epithelial cells.</title>
        <authorList>
            <person name="Dunk C."/>
            <person name="Ahmed A."/>
        </authorList>
    </citation>
    <scope>FUNCTION AS NEGATIVE REGULATOR OF KDR-MEDIATED CELL PROLIFERATION</scope>
</reference>
<reference key="20">
    <citation type="journal article" date="2001" name="Biochem. J.">
        <title>Direct identification of a major autophosphorylation site on vascular endothelial growth factor receptor Flt-1 that mediates phosphatidylinositol 3'-kinase binding.</title>
        <authorList>
            <person name="Yu Y."/>
            <person name="Hulmes J.D."/>
            <person name="Herley M.T."/>
            <person name="Whitney R.G."/>
            <person name="Crabb J.W."/>
            <person name="Sato J.D."/>
        </authorList>
    </citation>
    <scope>INTERACTION WITH PIK3R1 AND VEGFA</scope>
    <scope>AUTOPHOSPHORYLATION</scope>
    <scope>PHOSPHORYLATION AT TYR-1213</scope>
    <scope>SUBCELLULAR LOCATION</scope>
    <scope>IDENTIFICATION BY MASS SPECTROMETRY</scope>
    <scope>GLYCOSYLATION</scope>
</reference>
<reference key="21">
    <citation type="journal article" date="2001" name="Growth Factors">
        <title>Effect of placenta growth factor-1 on proliferation and release of nitric oxide, cyclic AMP and cyclic GMP in human epithelial cells expressing the FLT-1 receptor.</title>
        <authorList>
            <person name="Angelucci C."/>
            <person name="Lama G."/>
            <person name="Iacopino F."/>
            <person name="Maglione D."/>
            <person name="Sica G."/>
        </authorList>
    </citation>
    <scope>FUNCTION IN PGF-MEDIATED CHORIOCARCINOMA CELL PROLIFERATION</scope>
</reference>
<reference key="22">
    <citation type="journal article" date="2001" name="Int. J. Biochem. Cell Biol.">
        <title>Signaling properties of VEGF receptor-1 and -2 homo- and heterodimers.</title>
        <authorList>
            <person name="Huang K."/>
            <person name="Andersson C."/>
            <person name="Roomans G.M."/>
            <person name="Ito N."/>
            <person name="Claesson-Welsh L."/>
        </authorList>
    </citation>
    <scope>INTERACTION WITH KDR</scope>
    <scope>CATALYTIC ACTIVITY</scope>
    <scope>AUTOPHOSPHORYLATION</scope>
    <scope>FUNCTION IN VEGFA SIGNALING; PHOSPHORYLATION OF PLCG AND ACTIVATION OF PHOSPHATIDYLINOSITOL KINASE AND PHOSPHOLIPASE C</scope>
</reference>
<reference key="23">
    <citation type="journal article" date="2003" name="Diabetes">
        <title>Activation of vascular endothelial growth factor receptor-1 sustains angiogenesis and Bcl-2 expression via the phosphatidylinositol 3-kinase pathway in endothelial cells.</title>
        <authorList>
            <person name="Cai J."/>
            <person name="Ahmad S."/>
            <person name="Jiang W.G."/>
            <person name="Huang J."/>
            <person name="Kontos C.D."/>
            <person name="Boulton M."/>
            <person name="Ahmed A."/>
        </authorList>
    </citation>
    <scope>FUNCTION IN SIGNALING VIA ACTIVATION OF THE PHOSPHATIDYLINOSITOL KINASE PATHWAY AND POSITIVE REGULATION OF ANGIOGENESIS IN RESPONSE TO PGF AND VEGFA</scope>
</reference>
<reference key="24">
    <citation type="journal article" date="2003" name="Nat. Med.">
        <title>Role of PlGF in the intra- and intermolecular cross talk between the VEGF receptors Flt1 and Flk1.</title>
        <authorList>
            <person name="Autiero M."/>
            <person name="Waltenberger J."/>
            <person name="Communi D."/>
            <person name="Kranz A."/>
            <person name="Moons L."/>
            <person name="Lambrechts D."/>
            <person name="Kroll J."/>
            <person name="Plaisance S."/>
            <person name="De Mol M."/>
            <person name="Bono F."/>
            <person name="Kliche S."/>
            <person name="Fellbrich G."/>
            <person name="Ballmer-Hofer K."/>
            <person name="Maglione D."/>
            <person name="Mayr-Beyrle U."/>
            <person name="Dewerchin M."/>
            <person name="Dombrowski S."/>
            <person name="Stanimirovic D."/>
            <person name="Van Hummelen P."/>
            <person name="Dehio C."/>
            <person name="Hicklin D.J."/>
            <person name="Persico G."/>
            <person name="Herbert J.M."/>
            <person name="Communi D."/>
            <person name="Shibuya M."/>
            <person name="Collen D."/>
            <person name="Conway E.M."/>
            <person name="Carmeliet P."/>
        </authorList>
    </citation>
    <scope>INTERACTION WITH PGF AND KDR</scope>
    <scope>FUNCTION IN PHOSPHORYLATION OF KDR; VEGFA AND PGF SIGNALING</scope>
    <scope>CATALYTIC ACTIVITY</scope>
    <scope>IDENTIFICATION BY MASS SPECTROMETRY</scope>
    <scope>PHOSPHORYLATION AT TYR-1213; TYR-1327 AND TYR-1309</scope>
</reference>
<reference key="25">
    <citation type="journal article" date="2004" name="FASEB J.">
        <title>The c-Cbl/CD2AP complex regulates VEGF-induced endocytosis and degradation of Flt-1 (VEGFR-1).</title>
        <authorList>
            <person name="Kobayashi S."/>
            <person name="Sawano A."/>
            <person name="Nojima Y."/>
            <person name="Shibuya M."/>
            <person name="Maru Y."/>
        </authorList>
    </citation>
    <scope>INTERACTION WITH CBL AND CD2AP</scope>
    <scope>UBIQUITINATION</scope>
    <scope>AUTOPHOSPHORYLATION IN RESPONSE TO VEGFA</scope>
    <scope>MUTAGENESIS OF TYR-1333</scope>
    <scope>SUBCELLULAR LOCATION</scope>
</reference>
<reference key="26">
    <citation type="journal article" date="2005" name="Oncogene">
        <title>Expression and function of vascular endothelial growth factor receptor-1 on human colorectal cancer cells.</title>
        <authorList>
            <person name="Fan F."/>
            <person name="Wey J.S."/>
            <person name="McCarty M.F."/>
            <person name="Belcheva A."/>
            <person name="Liu W."/>
            <person name="Bauer T.W."/>
            <person name="Somcio R.J."/>
            <person name="Wu Y."/>
            <person name="Hooper A."/>
            <person name="Hicklin D.J."/>
            <person name="Ellis L.M."/>
        </authorList>
    </citation>
    <scope>FUNCTION IN VEGFA AND VEGFB SIGNALING; CANCER CELL MIGRATION; INVASIVENESS AND ACTIVATION OF MAPK1/ERK2 AND MAPK3/ERK1</scope>
</reference>
<reference key="27">
    <citation type="journal article" date="2006" name="Br. J. Cancer">
        <title>Vascular endothelial growth factor receptor-1 mediates migration of human colorectal carcinoma cells by activation of Src family kinases.</title>
        <authorList>
            <person name="Lesslie D.P."/>
            <person name="Summy J.M."/>
            <person name="Parikh N.U."/>
            <person name="Fan F."/>
            <person name="Trevino J.G."/>
            <person name="Sawyer T.K."/>
            <person name="Metcalf C.A."/>
            <person name="Shakespeare W.C."/>
            <person name="Hicklin D.J."/>
            <person name="Ellis L.M."/>
            <person name="Gallick G.E."/>
        </authorList>
    </citation>
    <scope>FUNCTION IN CELL MIGRATION AND PHOSPHORYLATION OF PTK2/FAK1; YES1 AND SRC</scope>
</reference>
<reference key="28">
    <citation type="journal article" date="2006" name="J. Biol. Chem.">
        <title>A single amino acid substitution in the activation loop defines the decoy characteristic of VEGFR-1/FLT-1.</title>
        <authorList>
            <person name="Meyer R.D."/>
            <person name="Mohammadi M."/>
            <person name="Rahimi N."/>
        </authorList>
    </citation>
    <scope>MUTAGENESIS OF ASN-1050</scope>
</reference>
<reference key="29">
    <citation type="journal article" date="2008" name="Arterioscler. Thromb. Vasc. Biol.">
        <title>The molecular basis of VEGFR-1 signal transduction pathways in primary human monocytes.</title>
        <authorList>
            <person name="Tchaikovski V."/>
            <person name="Fellbrich G."/>
            <person name="Waltenberger J."/>
        </authorList>
    </citation>
    <scope>FUNCTION IN PGF AND VEGFA SIGNALING; PHOSPHORYLATION OF AKT1; MAPK3/ERK1 AND MAP KINASES; CHEMOTAXIS AND ACTIVATION OF PHOSPHATIDYLINOSITOL 3-KINASE</scope>
    <scope>AUTOPHOSPHORYLATION IN RESPONSE TO PGF AND VEGFA</scope>
</reference>
<reference key="30">
    <citation type="journal article" date="2008" name="Circ. Res.">
        <title>Vascular endothelial growth factor receptor-1 regulates postnatal angiogenesis through inhibition of the excessive activation of Akt.</title>
        <authorList>
            <person name="Nishi J."/>
            <person name="Minamino T."/>
            <person name="Miyauchi H."/>
            <person name="Nojima A."/>
            <person name="Tateno K."/>
            <person name="Okada S."/>
            <person name="Orimo M."/>
            <person name="Moriya J."/>
            <person name="Fong G.H."/>
            <person name="Sunagawa K."/>
            <person name="Shibuya M."/>
            <person name="Komuro I."/>
        </authorList>
    </citation>
    <scope>FUNCTION IN ENDOTHELIAL CELL SURVIVAL AND ANGIOGENESIS</scope>
</reference>
<reference key="31">
    <citation type="journal article" date="2010" name="Br. J. Cancer">
        <title>Placental growth factor (PlGF) enhances breast cancer cell motility by mobilising ERK1/2 phosphorylation and cytoskeletal rearrangement.</title>
        <authorList>
            <person name="Taylor A.P."/>
            <person name="Leon E."/>
            <person name="Goldenberg D.M."/>
        </authorList>
    </citation>
    <scope>FUNCTION IN CANCER CELL MIGRATION AND ACTIVATION OF MAPK1/ERK2 AND/OR MAPK3/ERK1</scope>
</reference>
<reference key="32">
    <citation type="journal article" date="2011" name="J. Biol. Chem.">
        <title>RACK1 regulates VEGF/Flt1-mediated cell migration via activation of a PI3-K/Akt pathway.</title>
        <authorList>
            <person name="Wang F."/>
            <person name="Yamauchi M."/>
            <person name="Muramatsu M."/>
            <person name="Osawa T."/>
            <person name="Tsuchida R."/>
            <person name="Shibuya M."/>
        </authorList>
    </citation>
    <scope>INTERACTION WITH RACK1</scope>
</reference>
<reference key="33">
    <citation type="journal article" date="2011" name="J. Biol. Chem.">
        <title>gamma-Secretase and presenilin mediate cleavage and phosphorylation of vascular endothelial growth factor receptor-1.</title>
        <authorList>
            <person name="Cai J."/>
            <person name="Chen Z."/>
            <person name="Ruan Q."/>
            <person name="Han S."/>
            <person name="Liu L."/>
            <person name="Qi X."/>
            <person name="Boye S.L."/>
            <person name="Hauswirth W.W."/>
            <person name="Grant M.B."/>
            <person name="Boulton M.E."/>
        </authorList>
    </citation>
    <scope>INTERACTION WITH PSEN1 AND PTPRB</scope>
    <scope>DEPHOSPHORYLATION BY PTPRB</scope>
    <scope>MUTAGENESIS OF VAL-767</scope>
    <scope>PROTEOLYTIC CLEAVAGE BY PSEN1 AT VAL-767</scope>
</reference>
<reference key="34">
    <citation type="journal article" date="2011" name="Vasc. Cell">
        <title>Autocrine activity of soluble Flt-1 controls endothelial cell function and angiogenesis.</title>
        <authorList>
            <person name="Ahmad S."/>
            <person name="Hewett P.W."/>
            <person name="Al-Ani B."/>
            <person name="Sissaoui S."/>
            <person name="Fujisawa T."/>
            <person name="Cudmore M.J."/>
            <person name="Ahmed A."/>
        </authorList>
    </citation>
    <scope>FUNCTION AS DECOY RECEPTORS; REGULATION OF VEGFA SIGNALING AND REGULATION OF KDR ACTIVITY (ISOFORMS 2/3/4)</scope>
    <scope>ROLE IN PREECLAMPSIA</scope>
</reference>
<reference key="35">
    <citation type="journal article" date="2006" name="J. Biochem. Mol. Biol.">
        <title>Differential roles of vascular endothelial growth factor receptor-1 and receptor-2 in angiogenesis.</title>
        <authorList>
            <person name="Shibuya M."/>
        </authorList>
    </citation>
    <scope>REVIEW ON FUNCTION AS NEGATIVE REGULATOR OF ANGIOGENESIS DURING EMBRYONIC DEVELOPMENT; POSITIVE REGULATION OF MACROPHAGE FUNCTION IN ADULTHOOD; ROLE IN CARCINOGENESIS AND INFLAMMATION</scope>
</reference>
<reference key="36">
    <citation type="journal article" date="2008" name="Biochem. Biophys. Res. Commun.">
        <title>VEGF receptor protein-tyrosine kinases: structure and regulation.</title>
        <authorList>
            <person name="Roskoski R. Jr."/>
        </authorList>
    </citation>
    <scope>REVIEW ON STRUCTURE AND FUNCTION</scope>
</reference>
<reference key="37">
    <citation type="journal article" date="2009" name="Curr. Opin. Cell Biol.">
        <title>VEGFs and receptors involved in angiogenesis versus lymphangiogenesis.</title>
        <authorList>
            <person name="Lohela M."/>
            <person name="Bry M."/>
            <person name="Tammela T."/>
            <person name="Alitalo K."/>
        </authorList>
    </citation>
    <scope>REVIEW ON ROLE IN ANGIOGENESIS AND CANCER</scope>
</reference>
<reference key="38">
    <citation type="journal article" date="2010" name="Biochim. Biophys. Acta">
        <title>Structure-function analysis of VEGF receptor activation and the role of coreceptors in angiogenic signaling.</title>
        <authorList>
            <person name="Grunewald F.S."/>
            <person name="Prota A.E."/>
            <person name="Giese A."/>
            <person name="Ballmer-Hofer K."/>
        </authorList>
    </citation>
    <scope>REVIEW ON LIGAND SPECIFICITY; FUNCTION; STRUCTURE; PHOSPHORYLATION AND SIGNALING</scope>
</reference>
<reference key="39">
    <citation type="journal article" date="2010" name="Cancer">
        <title>Vascular endothelial growth factor receptor-1 in human cancer: concise review and rationale for development of IMC-18F1 (Human antibody targeting vascular endothelial growth factor receptor-1).</title>
        <authorList>
            <person name="Schwartz J.D."/>
            <person name="Rowinsky E.K."/>
            <person name="Youssoufian H."/>
            <person name="Pytowski B."/>
            <person name="Wu Y."/>
        </authorList>
    </citation>
    <scope>REVIEW ON ROLE IN CANCER</scope>
</reference>
<reference key="40">
    <citation type="journal article" date="2011" name="Biochem. J.">
        <title>Signal transduction by vascular endothelial growth factor receptors.</title>
        <authorList>
            <person name="Koch S."/>
            <person name="Tugues S."/>
            <person name="Li X."/>
            <person name="Gualandi L."/>
            <person name="Claesson-Welsh L."/>
        </authorList>
    </citation>
    <scope>REVIEW ON LIGAND SPECIFICITY; FUNCTION; STRUCTURE; PHOSPHORYLATION AND SIGNALING</scope>
</reference>
<reference key="41">
    <citation type="journal article" date="2011" name="Proc. Jpn. Acad., B, Phys. Biol. Sci.">
        <title>Involvement of Flt-1 (VEGF receptor-1) in cancer and preeclampsia.</title>
        <authorList>
            <person name="Shibuya M."/>
        </authorList>
    </citation>
    <scope>REVIEW ON ROLE IN CANCER AND PREECLAMPSIA</scope>
</reference>
<reference key="42">
    <citation type="journal article" date="1997" name="Cell">
        <title>Crystal structure at 1.7 A resolution of VEGF in complex with domain 2 of the Flt-1 receptor.</title>
        <authorList>
            <person name="Wiesmann C."/>
            <person name="Fuh G."/>
            <person name="Christinger H.W."/>
            <person name="Eigenbrot C."/>
            <person name="Wells J.A."/>
            <person name="de Vos A.M."/>
        </authorList>
    </citation>
    <scope>X-RAY CRYSTALLOGRAPHY (1.7 ANGSTROMS) OF 132-226 IN COMPLEX WITH VEGFA</scope>
    <scope>DOMAIN</scope>
</reference>
<reference key="43">
    <citation type="journal article" date="1999" name="J. Mol. Biol.">
        <title>Solution structure of the VEGF-binding domain of Flt-1: comparison of its free and bound states.</title>
        <authorList>
            <person name="Starovasnik M.A."/>
            <person name="Christinger H.W."/>
            <person name="Wiesmann C."/>
            <person name="Champe M.A."/>
            <person name="de Vos A.M."/>
            <person name="Skelton N.J."/>
        </authorList>
    </citation>
    <scope>STRUCTURE BY NMR OF 129-229</scope>
    <scope>X-RAY CRYSTALLOGRAPHY (2.7 ANGSTROMS) OF 129-229 IN COMPLEX WITH VEGFA</scope>
    <scope>SUBUNIT</scope>
    <scope>INTERACTION WITH VEGFA</scope>
</reference>
<reference key="44">
    <citation type="journal article" date="2004" name="J. Biol. Chem.">
        <title>The crystal structure of placental growth factor in complex with domain 2 of vascular endothelial growth factor receptor-1.</title>
        <authorList>
            <person name="Christinger H.W."/>
            <person name="Fuh G."/>
            <person name="de Vos A.M."/>
            <person name="Wiesmann C."/>
        </authorList>
    </citation>
    <scope>X-RAY CRYSTALLOGRAPHY (2.45 ANGSTROMS) OF 130-229 IN COMPLEX WITH PGF</scope>
</reference>
<reference key="45">
    <citation type="journal article" date="2010" name="J. Biol. Chem.">
        <title>Structural insights into the binding of vascular endothelial growth factor-B by VEGFR-1(D2): recognition and specificity.</title>
        <authorList>
            <person name="Iyer S."/>
            <person name="Darley P.I."/>
            <person name="Acharya K.R."/>
        </authorList>
    </citation>
    <scope>X-RAY CRYSTALLOGRAPHY (2.71 ANGSTROMS) OF 129-226 IN COMPLEX WITH VEGFB</scope>
    <scope>INTERACTION WITH VEGFB</scope>
    <scope>SUBUNIT</scope>
    <scope>DOMAIN</scope>
</reference>
<reference key="46">
    <citation type="journal article" date="2007" name="Nature">
        <title>Patterns of somatic mutation in human cancer genomes.</title>
        <authorList>
            <person name="Greenman C."/>
            <person name="Stephens P."/>
            <person name="Smith R."/>
            <person name="Dalgliesh G.L."/>
            <person name="Hunter C."/>
            <person name="Bignell G."/>
            <person name="Davies H."/>
            <person name="Teague J."/>
            <person name="Butler A."/>
            <person name="Stevens C."/>
            <person name="Edkins S."/>
            <person name="O'Meara S."/>
            <person name="Vastrik I."/>
            <person name="Schmidt E.E."/>
            <person name="Avis T."/>
            <person name="Barthorpe S."/>
            <person name="Bhamra G."/>
            <person name="Buck G."/>
            <person name="Choudhury B."/>
            <person name="Clements J."/>
            <person name="Cole J."/>
            <person name="Dicks E."/>
            <person name="Forbes S."/>
            <person name="Gray K."/>
            <person name="Halliday K."/>
            <person name="Harrison R."/>
            <person name="Hills K."/>
            <person name="Hinton J."/>
            <person name="Jenkinson A."/>
            <person name="Jones D."/>
            <person name="Menzies A."/>
            <person name="Mironenko T."/>
            <person name="Perry J."/>
            <person name="Raine K."/>
            <person name="Richardson D."/>
            <person name="Shepherd R."/>
            <person name="Small A."/>
            <person name="Tofts C."/>
            <person name="Varian J."/>
            <person name="Webb T."/>
            <person name="West S."/>
            <person name="Widaa S."/>
            <person name="Yates A."/>
            <person name="Cahill D.P."/>
            <person name="Louis D.N."/>
            <person name="Goldstraw P."/>
            <person name="Nicholson A.G."/>
            <person name="Brasseur F."/>
            <person name="Looijenga L."/>
            <person name="Weber B.L."/>
            <person name="Chiew Y.-E."/>
            <person name="DeFazio A."/>
            <person name="Greaves M.F."/>
            <person name="Green A.R."/>
            <person name="Campbell P."/>
            <person name="Birney E."/>
            <person name="Easton D.F."/>
            <person name="Chenevix-Trench G."/>
            <person name="Tan M.-H."/>
            <person name="Khoo S.K."/>
            <person name="Teh B.T."/>
            <person name="Yuen S.T."/>
            <person name="Leung S.Y."/>
            <person name="Wooster R."/>
            <person name="Futreal P.A."/>
            <person name="Stratton M.R."/>
        </authorList>
    </citation>
    <scope>VARIANTS [LARGE SCALE ANALYSIS] THR-60; LYS-144; GLN-281; ILE-422; GLN-781; VAL-938; ALA-982 AND VAL-1061</scope>
</reference>
<organism>
    <name type="scientific">Homo sapiens</name>
    <name type="common">Human</name>
    <dbReference type="NCBI Taxonomy" id="9606"/>
    <lineage>
        <taxon>Eukaryota</taxon>
        <taxon>Metazoa</taxon>
        <taxon>Chordata</taxon>
        <taxon>Craniata</taxon>
        <taxon>Vertebrata</taxon>
        <taxon>Euteleostomi</taxon>
        <taxon>Mammalia</taxon>
        <taxon>Eutheria</taxon>
        <taxon>Euarchontoglires</taxon>
        <taxon>Primates</taxon>
        <taxon>Haplorrhini</taxon>
        <taxon>Catarrhini</taxon>
        <taxon>Hominidae</taxon>
        <taxon>Homo</taxon>
    </lineage>
</organism>
<proteinExistence type="evidence at protein level"/>